<comment type="function">
    <text evidence="6 11 16">Component of the 20S core proteasome complex involved in the proteolytic degradation of most intracellular proteins. This complex plays numerous essential roles within the cell by associating with different regulatory particles. Associated with two 19S regulatory particles, forms the 26S proteasome and thus participates in the ATP-dependent degradation of ubiquitinated proteins. The 26S proteasome plays a key role in the maintenance of protein homeostasis by removing misfolded or damaged proteins that could impair cellular functions, and by removing proteins whose functions are no longer required. Associated with the PA200 or PA28, the 20S proteasome mediates ubiquitin-independent protein degradation. This type of proteolysis is required in several pathways including spermatogenesis (20S-PA200 complex) or generation of a subset of MHC class I-presented antigenic peptides (20S-PA28 complex).</text>
</comment>
<comment type="subunit">
    <text evidence="7 9 10 12 13 14 15">The 26S proteasome consists of a 20S proteasome core and two 19S regulatory subunits. The 20S proteasome core is a barrel-shaped complex made of 28 subunits that are arranged in four stacked rings. The two outer rings are each formed by seven alpha subunits, and the two inner rings are formed by seven beta subunits. The proteolytic activity is exerted by three beta-subunits PSMB5, PSMB6 and PSMB7. PSMA5 interacts directly with the PSMG1-PSMG2 heterodimer which promotes 20S proteasome assembly.</text>
</comment>
<comment type="interaction">
    <interactant intactId="EBI-355475">
        <id>P28066</id>
    </interactant>
    <interactant intactId="EBI-359310">
        <id>P25789</id>
        <label>PSMA4</label>
    </interactant>
    <organismsDiffer>false</organismsDiffer>
    <experiments>5</experiments>
</comment>
<comment type="interaction">
    <interactant intactId="EBI-355475">
        <id>P28066</id>
    </interactant>
    <interactant intactId="EBI-603272">
        <id>O14818</id>
        <label>PSMA7</label>
    </interactant>
    <organismsDiffer>false</organismsDiffer>
    <experiments>6</experiments>
</comment>
<comment type="interaction">
    <interactant intactId="EBI-355475">
        <id>P28066</id>
    </interactant>
    <interactant intactId="EBI-359318">
        <id>P55036</id>
        <label>PSMD4</label>
    </interactant>
    <organismsDiffer>false</organismsDiffer>
    <experiments>3</experiments>
</comment>
<comment type="subcellular location">
    <subcellularLocation>
        <location evidence="5 15">Cytoplasm</location>
    </subcellularLocation>
    <subcellularLocation>
        <location evidence="5 15">Nucleus</location>
    </subcellularLocation>
    <text evidence="15">Translocated from the cytoplasm into the nucleus following interaction with AKIRIN2, which bridges the proteasome with the nuclear import receptor IPO9.</text>
</comment>
<comment type="alternative products">
    <event type="alternative splicing"/>
    <isoform>
        <id>P28066-1</id>
        <name>1</name>
        <sequence type="displayed"/>
    </isoform>
    <isoform>
        <id>P28066-2</id>
        <name>2</name>
        <sequence type="described" ref="VSP_046241"/>
    </isoform>
</comment>
<comment type="tissue specificity">
    <text evidence="4">Expressed in fetal brain (at protein level).</text>
</comment>
<comment type="induction">
    <text evidence="4 8">Up-regulated in colon cancer cell lines. Up-regulated in fetal Down syndrome (DS) brain (at protein level). May be the target of the transcriptional activator NFE2L2.</text>
</comment>
<comment type="similarity">
    <text evidence="3">Belongs to the peptidase T1A family.</text>
</comment>
<evidence type="ECO:0000250" key="1"/>
<evidence type="ECO:0000250" key="2">
    <source>
        <dbReference type="UniProtKB" id="Q9Z2U1"/>
    </source>
</evidence>
<evidence type="ECO:0000255" key="3">
    <source>
        <dbReference type="PROSITE-ProRule" id="PRU00808"/>
    </source>
</evidence>
<evidence type="ECO:0000269" key="4">
    <source>
    </source>
</evidence>
<evidence type="ECO:0000269" key="5">
    <source>
    </source>
</evidence>
<evidence type="ECO:0000269" key="6">
    <source>
    </source>
</evidence>
<evidence type="ECO:0000269" key="7">
    <source>
    </source>
</evidence>
<evidence type="ECO:0000269" key="8">
    <source>
    </source>
</evidence>
<evidence type="ECO:0000269" key="9">
    <source>
    </source>
</evidence>
<evidence type="ECO:0000269" key="10">
    <source>
    </source>
</evidence>
<evidence type="ECO:0000269" key="11">
    <source>
    </source>
</evidence>
<evidence type="ECO:0000269" key="12">
    <source>
    </source>
</evidence>
<evidence type="ECO:0000269" key="13">
    <source>
    </source>
</evidence>
<evidence type="ECO:0000269" key="14">
    <source>
    </source>
</evidence>
<evidence type="ECO:0000269" key="15">
    <source>
    </source>
</evidence>
<evidence type="ECO:0000269" key="16">
    <source>
    </source>
</evidence>
<evidence type="ECO:0000303" key="17">
    <source>
    </source>
</evidence>
<evidence type="ECO:0000303" key="18">
    <source>
    </source>
</evidence>
<evidence type="ECO:0000305" key="19"/>
<evidence type="ECO:0000312" key="20">
    <source>
        <dbReference type="HGNC" id="HGNC:9534"/>
    </source>
</evidence>
<evidence type="ECO:0007744" key="21">
    <source>
    </source>
</evidence>
<evidence type="ECO:0007744" key="22">
    <source>
    </source>
</evidence>
<evidence type="ECO:0007744" key="23">
    <source>
    </source>
</evidence>
<evidence type="ECO:0007744" key="24">
    <source>
    </source>
</evidence>
<evidence type="ECO:0007829" key="25">
    <source>
        <dbReference type="PDB" id="5LE5"/>
    </source>
</evidence>
<evidence type="ECO:0007829" key="26">
    <source>
        <dbReference type="PDB" id="5VFO"/>
    </source>
</evidence>
<evidence type="ECO:0007829" key="27">
    <source>
        <dbReference type="PDB" id="6KWY"/>
    </source>
</evidence>
<evidence type="ECO:0007829" key="28">
    <source>
        <dbReference type="PDB" id="7AWE"/>
    </source>
</evidence>
<evidence type="ECO:0007829" key="29">
    <source>
        <dbReference type="PDB" id="7NAO"/>
    </source>
</evidence>
<evidence type="ECO:0007829" key="30">
    <source>
        <dbReference type="PDB" id="8CVR"/>
    </source>
</evidence>
<evidence type="ECO:0007829" key="31">
    <source>
        <dbReference type="PDB" id="8QYM"/>
    </source>
</evidence>
<evidence type="ECO:0007829" key="32">
    <source>
        <dbReference type="PDB" id="8QYN"/>
    </source>
</evidence>
<evidence type="ECO:0007829" key="33">
    <source>
        <dbReference type="PDB" id="8UD9"/>
    </source>
</evidence>
<organism>
    <name type="scientific">Homo sapiens</name>
    <name type="common">Human</name>
    <dbReference type="NCBI Taxonomy" id="9606"/>
    <lineage>
        <taxon>Eukaryota</taxon>
        <taxon>Metazoa</taxon>
        <taxon>Chordata</taxon>
        <taxon>Craniata</taxon>
        <taxon>Vertebrata</taxon>
        <taxon>Euteleostomi</taxon>
        <taxon>Mammalia</taxon>
        <taxon>Eutheria</taxon>
        <taxon>Euarchontoglires</taxon>
        <taxon>Primates</taxon>
        <taxon>Haplorrhini</taxon>
        <taxon>Catarrhini</taxon>
        <taxon>Hominidae</taxon>
        <taxon>Homo</taxon>
    </lineage>
</organism>
<accession>P28066</accession>
<accession>B2R8F6</accession>
<accession>B4E2V4</accession>
<accession>Q3T1C1</accession>
<accession>Q6IBF7</accession>
<protein>
    <recommendedName>
        <fullName evidence="19">Proteasome subunit alpha type-5</fullName>
    </recommendedName>
    <alternativeName>
        <fullName>Macropain zeta chain</fullName>
    </alternativeName>
    <alternativeName>
        <fullName>Multicatalytic endopeptidase complex zeta chain</fullName>
    </alternativeName>
    <alternativeName>
        <fullName evidence="18">Proteasome subunit alpha-5</fullName>
        <shortName evidence="18">alpha-5</shortName>
    </alternativeName>
    <alternativeName>
        <fullName>Proteasome zeta chain</fullName>
    </alternativeName>
</protein>
<dbReference type="EMBL" id="X61970">
    <property type="protein sequence ID" value="CAA43962.1"/>
    <property type="molecule type" value="mRNA"/>
</dbReference>
<dbReference type="EMBL" id="CR456847">
    <property type="protein sequence ID" value="CAG33128.1"/>
    <property type="molecule type" value="mRNA"/>
</dbReference>
<dbReference type="EMBL" id="AK304448">
    <property type="protein sequence ID" value="BAG65266.1"/>
    <property type="molecule type" value="mRNA"/>
</dbReference>
<dbReference type="EMBL" id="AK313351">
    <property type="protein sequence ID" value="BAG36153.1"/>
    <property type="molecule type" value="mRNA"/>
</dbReference>
<dbReference type="EMBL" id="AL356735">
    <property type="status" value="NOT_ANNOTATED_CDS"/>
    <property type="molecule type" value="Genomic_DNA"/>
</dbReference>
<dbReference type="EMBL" id="AL390252">
    <property type="status" value="NOT_ANNOTATED_CDS"/>
    <property type="molecule type" value="Genomic_DNA"/>
</dbReference>
<dbReference type="EMBL" id="CH471122">
    <property type="protein sequence ID" value="EAW56381.1"/>
    <property type="molecule type" value="Genomic_DNA"/>
</dbReference>
<dbReference type="EMBL" id="CH471122">
    <property type="protein sequence ID" value="EAW56383.1"/>
    <property type="molecule type" value="Genomic_DNA"/>
</dbReference>
<dbReference type="EMBL" id="BC102018">
    <property type="protein sequence ID" value="AAI02019.1"/>
    <property type="molecule type" value="mRNA"/>
</dbReference>
<dbReference type="EMBL" id="BC102019">
    <property type="protein sequence ID" value="AAI02020.1"/>
    <property type="molecule type" value="mRNA"/>
</dbReference>
<dbReference type="EMBL" id="BC102020">
    <property type="protein sequence ID" value="AAI02021.1"/>
    <property type="molecule type" value="mRNA"/>
</dbReference>
<dbReference type="EMBL" id="BC103751">
    <property type="protein sequence ID" value="AAI03752.1"/>
    <property type="molecule type" value="mRNA"/>
</dbReference>
<dbReference type="CCDS" id="CCDS55619.1">
    <molecule id="P28066-2"/>
</dbReference>
<dbReference type="CCDS" id="CCDS799.1">
    <molecule id="P28066-1"/>
</dbReference>
<dbReference type="PIR" id="S17521">
    <property type="entry name" value="S17521"/>
</dbReference>
<dbReference type="RefSeq" id="NP_001186701.1">
    <molecule id="P28066-2"/>
    <property type="nucleotide sequence ID" value="NM_001199772.2"/>
</dbReference>
<dbReference type="RefSeq" id="NP_001186702.1">
    <molecule id="P28066-2"/>
    <property type="nucleotide sequence ID" value="NM_001199773.2"/>
</dbReference>
<dbReference type="RefSeq" id="NP_001186703.1">
    <molecule id="P28066-2"/>
    <property type="nucleotide sequence ID" value="NM_001199774.2"/>
</dbReference>
<dbReference type="RefSeq" id="NP_002781.2">
    <molecule id="P28066-1"/>
    <property type="nucleotide sequence ID" value="NM_002790.3"/>
</dbReference>
<dbReference type="PDB" id="4R3O">
    <property type="method" value="X-ray"/>
    <property type="resolution" value="2.60 A"/>
    <property type="chains" value="E/S=8-241"/>
</dbReference>
<dbReference type="PDB" id="4R67">
    <property type="method" value="X-ray"/>
    <property type="resolution" value="2.89 A"/>
    <property type="chains" value="E/S/g/u=8-241"/>
</dbReference>
<dbReference type="PDB" id="5A0Q">
    <property type="method" value="EM"/>
    <property type="resolution" value="3.50 A"/>
    <property type="chains" value="E/S=1-241"/>
</dbReference>
<dbReference type="PDB" id="5GJQ">
    <property type="method" value="EM"/>
    <property type="resolution" value="4.50 A"/>
    <property type="chains" value="F/l=1-241"/>
</dbReference>
<dbReference type="PDB" id="5GJR">
    <property type="method" value="EM"/>
    <property type="resolution" value="3.50 A"/>
    <property type="chains" value="F/l=1-241"/>
</dbReference>
<dbReference type="PDB" id="5L4G">
    <property type="method" value="EM"/>
    <property type="resolution" value="4.02 A"/>
    <property type="chains" value="E/R=1-241"/>
</dbReference>
<dbReference type="PDB" id="5LE5">
    <property type="method" value="X-ray"/>
    <property type="resolution" value="1.80 A"/>
    <property type="chains" value="D/R=1-241"/>
</dbReference>
<dbReference type="PDB" id="5LEX">
    <property type="method" value="X-ray"/>
    <property type="resolution" value="2.20 A"/>
    <property type="chains" value="D/R=1-241"/>
</dbReference>
<dbReference type="PDB" id="5LEY">
    <property type="method" value="X-ray"/>
    <property type="resolution" value="1.90 A"/>
    <property type="chains" value="D/R=1-241"/>
</dbReference>
<dbReference type="PDB" id="5LEZ">
    <property type="method" value="X-ray"/>
    <property type="resolution" value="2.19 A"/>
    <property type="chains" value="D/R=1-241"/>
</dbReference>
<dbReference type="PDB" id="5LF0">
    <property type="method" value="X-ray"/>
    <property type="resolution" value="2.41 A"/>
    <property type="chains" value="D/R=1-241"/>
</dbReference>
<dbReference type="PDB" id="5LF1">
    <property type="method" value="X-ray"/>
    <property type="resolution" value="2.00 A"/>
    <property type="chains" value="D/R=1-241"/>
</dbReference>
<dbReference type="PDB" id="5LF3">
    <property type="method" value="X-ray"/>
    <property type="resolution" value="2.10 A"/>
    <property type="chains" value="D/R=1-241"/>
</dbReference>
<dbReference type="PDB" id="5LF4">
    <property type="method" value="X-ray"/>
    <property type="resolution" value="1.99 A"/>
    <property type="chains" value="D/R=1-241"/>
</dbReference>
<dbReference type="PDB" id="5LF6">
    <property type="method" value="X-ray"/>
    <property type="resolution" value="2.07 A"/>
    <property type="chains" value="D/R=1-241"/>
</dbReference>
<dbReference type="PDB" id="5LF7">
    <property type="method" value="X-ray"/>
    <property type="resolution" value="2.00 A"/>
    <property type="chains" value="D/R=1-241"/>
</dbReference>
<dbReference type="PDB" id="5LN3">
    <property type="method" value="EM"/>
    <property type="resolution" value="6.80 A"/>
    <property type="chains" value="E=1-241"/>
</dbReference>
<dbReference type="PDB" id="5M32">
    <property type="method" value="EM"/>
    <property type="resolution" value="3.80 A"/>
    <property type="chains" value="D/R=1-241"/>
</dbReference>
<dbReference type="PDB" id="5T0C">
    <property type="method" value="EM"/>
    <property type="resolution" value="3.80 A"/>
    <property type="chains" value="AK/BK=2-241"/>
</dbReference>
<dbReference type="PDB" id="5T0G">
    <property type="method" value="EM"/>
    <property type="resolution" value="4.40 A"/>
    <property type="chains" value="K=2-241"/>
</dbReference>
<dbReference type="PDB" id="5T0H">
    <property type="method" value="EM"/>
    <property type="resolution" value="6.80 A"/>
    <property type="chains" value="K=2-241"/>
</dbReference>
<dbReference type="PDB" id="5T0I">
    <property type="method" value="EM"/>
    <property type="resolution" value="8.00 A"/>
    <property type="chains" value="K=2-241"/>
</dbReference>
<dbReference type="PDB" id="5T0J">
    <property type="method" value="EM"/>
    <property type="resolution" value="8.00 A"/>
    <property type="chains" value="K=2-241"/>
</dbReference>
<dbReference type="PDB" id="5VFO">
    <property type="method" value="EM"/>
    <property type="resolution" value="3.50 A"/>
    <property type="chains" value="K/k=8-241"/>
</dbReference>
<dbReference type="PDB" id="5VFP">
    <property type="method" value="EM"/>
    <property type="resolution" value="4.20 A"/>
    <property type="chains" value="K/k=8-241"/>
</dbReference>
<dbReference type="PDB" id="5VFQ">
    <property type="method" value="EM"/>
    <property type="resolution" value="4.20 A"/>
    <property type="chains" value="K/k=8-241"/>
</dbReference>
<dbReference type="PDB" id="5VFR">
    <property type="method" value="EM"/>
    <property type="resolution" value="4.90 A"/>
    <property type="chains" value="K/k=8-241"/>
</dbReference>
<dbReference type="PDB" id="5VFS">
    <property type="method" value="EM"/>
    <property type="resolution" value="3.60 A"/>
    <property type="chains" value="K/k=8-241"/>
</dbReference>
<dbReference type="PDB" id="5VFT">
    <property type="method" value="EM"/>
    <property type="resolution" value="7.00 A"/>
    <property type="chains" value="K/k=8-241"/>
</dbReference>
<dbReference type="PDB" id="5VFU">
    <property type="method" value="EM"/>
    <property type="resolution" value="5.80 A"/>
    <property type="chains" value="K/k=8-241"/>
</dbReference>
<dbReference type="PDB" id="6AVO">
    <property type="method" value="EM"/>
    <property type="resolution" value="3.80 A"/>
    <property type="chains" value="H/M=1-241"/>
</dbReference>
<dbReference type="PDB" id="6E5B">
    <property type="method" value="X-ray"/>
    <property type="resolution" value="2.77 A"/>
    <property type="chains" value="D/R=1-241"/>
</dbReference>
<dbReference type="PDB" id="6KWY">
    <property type="method" value="EM"/>
    <property type="resolution" value="2.72 A"/>
    <property type="chains" value="D/R=1-241"/>
</dbReference>
<dbReference type="PDB" id="6MSB">
    <property type="method" value="EM"/>
    <property type="resolution" value="3.00 A"/>
    <property type="chains" value="K/k=2-241"/>
</dbReference>
<dbReference type="PDB" id="6MSD">
    <property type="method" value="EM"/>
    <property type="resolution" value="3.20 A"/>
    <property type="chains" value="K/k=2-241"/>
</dbReference>
<dbReference type="PDB" id="6MSE">
    <property type="method" value="EM"/>
    <property type="resolution" value="3.30 A"/>
    <property type="chains" value="Y=170-218"/>
</dbReference>
<dbReference type="PDB" id="6MSG">
    <property type="method" value="EM"/>
    <property type="resolution" value="3.50 A"/>
    <property type="chains" value="K/k=2-241"/>
</dbReference>
<dbReference type="PDB" id="6MSH">
    <property type="method" value="EM"/>
    <property type="resolution" value="3.60 A"/>
    <property type="chains" value="K/k=2-241"/>
</dbReference>
<dbReference type="PDB" id="6MSJ">
    <property type="method" value="EM"/>
    <property type="resolution" value="3.30 A"/>
    <property type="chains" value="K/k=2-241"/>
</dbReference>
<dbReference type="PDB" id="6MSK">
    <property type="method" value="EM"/>
    <property type="resolution" value="3.20 A"/>
    <property type="chains" value="K/k=2-241"/>
</dbReference>
<dbReference type="PDB" id="6R70">
    <property type="method" value="EM"/>
    <property type="resolution" value="3.50 A"/>
    <property type="chains" value="D/R=9-241"/>
</dbReference>
<dbReference type="PDB" id="6REY">
    <property type="method" value="EM"/>
    <property type="resolution" value="3.00 A"/>
    <property type="chains" value="E/S=1-241"/>
</dbReference>
<dbReference type="PDB" id="6RGQ">
    <property type="method" value="EM"/>
    <property type="resolution" value="2.60 A"/>
    <property type="chains" value="E/S=1-241"/>
</dbReference>
<dbReference type="PDB" id="6WJD">
    <property type="method" value="EM"/>
    <property type="resolution" value="4.80 A"/>
    <property type="chains" value="K/k=2-241"/>
</dbReference>
<dbReference type="PDB" id="6WJN">
    <property type="method" value="EM"/>
    <property type="resolution" value="5.70 A"/>
    <property type="chains" value="K/k=8-241"/>
</dbReference>
<dbReference type="PDB" id="6XMJ">
    <property type="method" value="EM"/>
    <property type="resolution" value="3.00 A"/>
    <property type="chains" value="E=8-241"/>
</dbReference>
<dbReference type="PDB" id="7AWE">
    <property type="method" value="X-ray"/>
    <property type="resolution" value="2.29 A"/>
    <property type="chains" value="E/S=9-240"/>
</dbReference>
<dbReference type="PDB" id="7B12">
    <property type="method" value="X-ray"/>
    <property type="resolution" value="2.43 A"/>
    <property type="chains" value="E/s=9-240"/>
</dbReference>
<dbReference type="PDB" id="7LXV">
    <property type="method" value="EM"/>
    <property type="resolution" value="3.40 A"/>
    <property type="chains" value="D/R=1-241"/>
</dbReference>
<dbReference type="PDB" id="7NAN">
    <property type="method" value="EM"/>
    <property type="resolution" value="2.80 A"/>
    <property type="chains" value="D/R=1-241"/>
</dbReference>
<dbReference type="PDB" id="7NAO">
    <property type="method" value="EM"/>
    <property type="resolution" value="2.90 A"/>
    <property type="chains" value="D/R=1-241"/>
</dbReference>
<dbReference type="PDB" id="7NAP">
    <property type="method" value="EM"/>
    <property type="resolution" value="3.20 A"/>
    <property type="chains" value="D/R=1-241"/>
</dbReference>
<dbReference type="PDB" id="7NAQ">
    <property type="method" value="EM"/>
    <property type="resolution" value="3.20 A"/>
    <property type="chains" value="D/R=1-241"/>
</dbReference>
<dbReference type="PDB" id="7NHT">
    <property type="method" value="EM"/>
    <property type="resolution" value="2.80 A"/>
    <property type="chains" value="D=1-241"/>
</dbReference>
<dbReference type="PDB" id="7PG9">
    <property type="method" value="EM"/>
    <property type="resolution" value="3.70 A"/>
    <property type="chains" value="E/S=1-241"/>
</dbReference>
<dbReference type="PDB" id="7QXN">
    <property type="method" value="EM"/>
    <property type="resolution" value="3.70 A"/>
    <property type="chains" value="K/k=2-241"/>
</dbReference>
<dbReference type="PDB" id="7QXP">
    <property type="method" value="EM"/>
    <property type="resolution" value="3.60 A"/>
    <property type="chains" value="K/k=2-241"/>
</dbReference>
<dbReference type="PDB" id="7QXU">
    <property type="method" value="EM"/>
    <property type="resolution" value="4.30 A"/>
    <property type="chains" value="K/k=2-241"/>
</dbReference>
<dbReference type="PDB" id="7QXW">
    <property type="method" value="EM"/>
    <property type="resolution" value="4.10 A"/>
    <property type="chains" value="K/k=2-241"/>
</dbReference>
<dbReference type="PDB" id="7QXX">
    <property type="method" value="EM"/>
    <property type="resolution" value="4.40 A"/>
    <property type="chains" value="K/k=2-241"/>
</dbReference>
<dbReference type="PDB" id="7QY7">
    <property type="method" value="EM"/>
    <property type="resolution" value="4.70 A"/>
    <property type="chains" value="K/k=2-241"/>
</dbReference>
<dbReference type="PDB" id="7QYA">
    <property type="method" value="EM"/>
    <property type="resolution" value="4.80 A"/>
    <property type="chains" value="K/k=2-241"/>
</dbReference>
<dbReference type="PDB" id="7QYB">
    <property type="method" value="EM"/>
    <property type="resolution" value="4.10 A"/>
    <property type="chains" value="K/k=2-241"/>
</dbReference>
<dbReference type="PDB" id="7V5G">
    <property type="method" value="EM"/>
    <property type="resolution" value="4.47 A"/>
    <property type="chains" value="S/Z=1-241"/>
</dbReference>
<dbReference type="PDB" id="7V5M">
    <property type="method" value="EM"/>
    <property type="resolution" value="3.88 A"/>
    <property type="chains" value="E/S=1-241"/>
</dbReference>
<dbReference type="PDB" id="7W37">
    <property type="method" value="EM"/>
    <property type="resolution" value="3.00 A"/>
    <property type="chains" value="K/k=1-241"/>
</dbReference>
<dbReference type="PDB" id="7W38">
    <property type="method" value="EM"/>
    <property type="resolution" value="3.10 A"/>
    <property type="chains" value="K/k=1-241"/>
</dbReference>
<dbReference type="PDB" id="7W39">
    <property type="method" value="EM"/>
    <property type="resolution" value="3.20 A"/>
    <property type="chains" value="K/k=1-241"/>
</dbReference>
<dbReference type="PDB" id="7W3A">
    <property type="method" value="EM"/>
    <property type="resolution" value="3.50 A"/>
    <property type="chains" value="K/k=1-241"/>
</dbReference>
<dbReference type="PDB" id="7W3B">
    <property type="method" value="EM"/>
    <property type="resolution" value="3.60 A"/>
    <property type="chains" value="K/k=1-241"/>
</dbReference>
<dbReference type="PDB" id="7W3C">
    <property type="method" value="EM"/>
    <property type="resolution" value="3.40 A"/>
    <property type="chains" value="K/k=1-241"/>
</dbReference>
<dbReference type="PDB" id="7W3F">
    <property type="method" value="EM"/>
    <property type="resolution" value="3.30 A"/>
    <property type="chains" value="K/k=1-241"/>
</dbReference>
<dbReference type="PDB" id="7W3G">
    <property type="method" value="EM"/>
    <property type="resolution" value="3.20 A"/>
    <property type="chains" value="K/k=1-241"/>
</dbReference>
<dbReference type="PDB" id="7W3H">
    <property type="method" value="EM"/>
    <property type="resolution" value="3.20 A"/>
    <property type="chains" value="K/k=1-241"/>
</dbReference>
<dbReference type="PDB" id="7W3I">
    <property type="method" value="EM"/>
    <property type="resolution" value="3.50 A"/>
    <property type="chains" value="K/k=1-241"/>
</dbReference>
<dbReference type="PDB" id="7W3J">
    <property type="method" value="EM"/>
    <property type="resolution" value="3.50 A"/>
    <property type="chains" value="K/k=1-241"/>
</dbReference>
<dbReference type="PDB" id="7W3K">
    <property type="method" value="EM"/>
    <property type="resolution" value="3.60 A"/>
    <property type="chains" value="K/k=1-241"/>
</dbReference>
<dbReference type="PDB" id="7W3M">
    <property type="method" value="EM"/>
    <property type="resolution" value="3.50 A"/>
    <property type="chains" value="K/k=1-241"/>
</dbReference>
<dbReference type="PDB" id="8BZL">
    <property type="method" value="X-ray"/>
    <property type="resolution" value="2.14 A"/>
    <property type="chains" value="D/R=1-241"/>
</dbReference>
<dbReference type="PDB" id="8CVR">
    <property type="method" value="EM"/>
    <property type="resolution" value="2.70 A"/>
    <property type="chains" value="E/S=1-241"/>
</dbReference>
<dbReference type="PDB" id="8CVS">
    <property type="method" value="EM"/>
    <property type="resolution" value="3.10 A"/>
    <property type="chains" value="D/R=1-241"/>
</dbReference>
<dbReference type="PDB" id="8CVT">
    <property type="method" value="EM"/>
    <property type="resolution" value="3.00 A"/>
    <property type="chains" value="K/k=1-241"/>
</dbReference>
<dbReference type="PDB" id="8CXB">
    <property type="method" value="EM"/>
    <property type="resolution" value="2.90 A"/>
    <property type="chains" value="D/R=1-241"/>
</dbReference>
<dbReference type="PDB" id="8JRI">
    <property type="method" value="EM"/>
    <property type="resolution" value="3.40 A"/>
    <property type="chains" value="K=1-241"/>
</dbReference>
<dbReference type="PDB" id="8JRT">
    <property type="method" value="EM"/>
    <property type="resolution" value="3.60 A"/>
    <property type="chains" value="K=1-241"/>
</dbReference>
<dbReference type="PDB" id="8JTI">
    <property type="method" value="EM"/>
    <property type="resolution" value="3.80 A"/>
    <property type="chains" value="K=1-241"/>
</dbReference>
<dbReference type="PDB" id="8K0G">
    <property type="method" value="EM"/>
    <property type="resolution" value="3.80 A"/>
    <property type="chains" value="K=1-241"/>
</dbReference>
<dbReference type="PDB" id="8QYJ">
    <property type="method" value="EM"/>
    <property type="resolution" value="2.73 A"/>
    <property type="chains" value="D=1-241"/>
</dbReference>
<dbReference type="PDB" id="8QYL">
    <property type="method" value="EM"/>
    <property type="resolution" value="2.67 A"/>
    <property type="chains" value="D=1-241"/>
</dbReference>
<dbReference type="PDB" id="8QYM">
    <property type="method" value="EM"/>
    <property type="resolution" value="2.73 A"/>
    <property type="chains" value="D=1-241"/>
</dbReference>
<dbReference type="PDB" id="8QYN">
    <property type="method" value="EM"/>
    <property type="resolution" value="2.88 A"/>
    <property type="chains" value="D=1-241"/>
</dbReference>
<dbReference type="PDB" id="8QYO">
    <property type="method" value="EM"/>
    <property type="resolution" value="2.84 A"/>
    <property type="chains" value="D/R=1-241"/>
</dbReference>
<dbReference type="PDB" id="8QYS">
    <property type="method" value="EM"/>
    <property type="resolution" value="3.89 A"/>
    <property type="chains" value="D/U=1-240"/>
</dbReference>
<dbReference type="PDB" id="8QZ9">
    <property type="method" value="EM"/>
    <property type="resolution" value="2.95 A"/>
    <property type="chains" value="D=1-241"/>
</dbReference>
<dbReference type="PDB" id="8TM3">
    <property type="method" value="EM"/>
    <property type="resolution" value="3.00 A"/>
    <property type="chains" value="D=1-241"/>
</dbReference>
<dbReference type="PDB" id="8TM4">
    <property type="method" value="EM"/>
    <property type="resolution" value="3.00 A"/>
    <property type="chains" value="D=1-241"/>
</dbReference>
<dbReference type="PDB" id="8TM5">
    <property type="method" value="EM"/>
    <property type="resolution" value="3.00 A"/>
    <property type="chains" value="D=1-241"/>
</dbReference>
<dbReference type="PDB" id="8TM6">
    <property type="method" value="EM"/>
    <property type="resolution" value="2.80 A"/>
    <property type="chains" value="D/R=1-241"/>
</dbReference>
<dbReference type="PDB" id="8UD9">
    <property type="method" value="EM"/>
    <property type="resolution" value="2.04 A"/>
    <property type="chains" value="E/S=1-241"/>
</dbReference>
<dbReference type="PDB" id="8USB">
    <property type="method" value="EM"/>
    <property type="resolution" value="2.73 A"/>
    <property type="chains" value="K=1-241"/>
</dbReference>
<dbReference type="PDB" id="8USC">
    <property type="method" value="EM"/>
    <property type="resolution" value="3.10 A"/>
    <property type="chains" value="K=1-241"/>
</dbReference>
<dbReference type="PDB" id="8YIX">
    <property type="method" value="EM"/>
    <property type="resolution" value="2.91 A"/>
    <property type="chains" value="D=1-241"/>
</dbReference>
<dbReference type="PDB" id="8YIY">
    <property type="method" value="EM"/>
    <property type="resolution" value="3.41 A"/>
    <property type="chains" value="D/R=1-241"/>
</dbReference>
<dbReference type="PDB" id="8YIZ">
    <property type="method" value="EM"/>
    <property type="resolution" value="3.79 A"/>
    <property type="chains" value="D/R=1-241"/>
</dbReference>
<dbReference type="PDB" id="9E8G">
    <property type="method" value="EM"/>
    <property type="resolution" value="3.01 A"/>
    <property type="chains" value="K=1-241"/>
</dbReference>
<dbReference type="PDB" id="9E8H">
    <property type="method" value="EM"/>
    <property type="resolution" value="2.90 A"/>
    <property type="chains" value="K=1-241"/>
</dbReference>
<dbReference type="PDB" id="9E8I">
    <property type="method" value="EM"/>
    <property type="resolution" value="2.87 A"/>
    <property type="chains" value="K=1-241"/>
</dbReference>
<dbReference type="PDB" id="9E8J">
    <property type="method" value="EM"/>
    <property type="resolution" value="3.47 A"/>
    <property type="chains" value="K=1-241"/>
</dbReference>
<dbReference type="PDB" id="9E8K">
    <property type="method" value="EM"/>
    <property type="resolution" value="4.08 A"/>
    <property type="chains" value="K=1-241"/>
</dbReference>
<dbReference type="PDB" id="9E8L">
    <property type="method" value="EM"/>
    <property type="resolution" value="3.59 A"/>
    <property type="chains" value="K=1-241"/>
</dbReference>
<dbReference type="PDB" id="9E8N">
    <property type="method" value="EM"/>
    <property type="resolution" value="3.62 A"/>
    <property type="chains" value="K=1-241"/>
</dbReference>
<dbReference type="PDB" id="9E8O">
    <property type="method" value="EM"/>
    <property type="resolution" value="3.10 A"/>
    <property type="chains" value="K=1-241"/>
</dbReference>
<dbReference type="PDB" id="9E8Q">
    <property type="method" value="EM"/>
    <property type="resolution" value="3.16 A"/>
    <property type="chains" value="K=1-241"/>
</dbReference>
<dbReference type="PDB" id="9HMN">
    <property type="method" value="EM"/>
    <property type="resolution" value="2.55 A"/>
    <property type="chains" value="E/R=1-241"/>
</dbReference>
<dbReference type="PDBsum" id="4R3O"/>
<dbReference type="PDBsum" id="4R67"/>
<dbReference type="PDBsum" id="5A0Q"/>
<dbReference type="PDBsum" id="5GJQ"/>
<dbReference type="PDBsum" id="5GJR"/>
<dbReference type="PDBsum" id="5L4G"/>
<dbReference type="PDBsum" id="5LE5"/>
<dbReference type="PDBsum" id="5LEX"/>
<dbReference type="PDBsum" id="5LEY"/>
<dbReference type="PDBsum" id="5LEZ"/>
<dbReference type="PDBsum" id="5LF0"/>
<dbReference type="PDBsum" id="5LF1"/>
<dbReference type="PDBsum" id="5LF3"/>
<dbReference type="PDBsum" id="5LF4"/>
<dbReference type="PDBsum" id="5LF6"/>
<dbReference type="PDBsum" id="5LF7"/>
<dbReference type="PDBsum" id="5LN3"/>
<dbReference type="PDBsum" id="5M32"/>
<dbReference type="PDBsum" id="5T0C"/>
<dbReference type="PDBsum" id="5T0G"/>
<dbReference type="PDBsum" id="5T0H"/>
<dbReference type="PDBsum" id="5T0I"/>
<dbReference type="PDBsum" id="5T0J"/>
<dbReference type="PDBsum" id="5VFO"/>
<dbReference type="PDBsum" id="5VFP"/>
<dbReference type="PDBsum" id="5VFQ"/>
<dbReference type="PDBsum" id="5VFR"/>
<dbReference type="PDBsum" id="5VFS"/>
<dbReference type="PDBsum" id="5VFT"/>
<dbReference type="PDBsum" id="5VFU"/>
<dbReference type="PDBsum" id="6AVO"/>
<dbReference type="PDBsum" id="6E5B"/>
<dbReference type="PDBsum" id="6KWY"/>
<dbReference type="PDBsum" id="6MSB"/>
<dbReference type="PDBsum" id="6MSD"/>
<dbReference type="PDBsum" id="6MSE"/>
<dbReference type="PDBsum" id="6MSG"/>
<dbReference type="PDBsum" id="6MSH"/>
<dbReference type="PDBsum" id="6MSJ"/>
<dbReference type="PDBsum" id="6MSK"/>
<dbReference type="PDBsum" id="6R70"/>
<dbReference type="PDBsum" id="6REY"/>
<dbReference type="PDBsum" id="6RGQ"/>
<dbReference type="PDBsum" id="6WJD"/>
<dbReference type="PDBsum" id="6WJN"/>
<dbReference type="PDBsum" id="6XMJ"/>
<dbReference type="PDBsum" id="7AWE"/>
<dbReference type="PDBsum" id="7B12"/>
<dbReference type="PDBsum" id="7LXV"/>
<dbReference type="PDBsum" id="7NAN"/>
<dbReference type="PDBsum" id="7NAO"/>
<dbReference type="PDBsum" id="7NAP"/>
<dbReference type="PDBsum" id="7NAQ"/>
<dbReference type="PDBsum" id="7NHT"/>
<dbReference type="PDBsum" id="7PG9"/>
<dbReference type="PDBsum" id="7QXN"/>
<dbReference type="PDBsum" id="7QXP"/>
<dbReference type="PDBsum" id="7QXU"/>
<dbReference type="PDBsum" id="7QXW"/>
<dbReference type="PDBsum" id="7QXX"/>
<dbReference type="PDBsum" id="7QY7"/>
<dbReference type="PDBsum" id="7QYA"/>
<dbReference type="PDBsum" id="7QYB"/>
<dbReference type="PDBsum" id="7V5G"/>
<dbReference type="PDBsum" id="7V5M"/>
<dbReference type="PDBsum" id="7W37"/>
<dbReference type="PDBsum" id="7W38"/>
<dbReference type="PDBsum" id="7W39"/>
<dbReference type="PDBsum" id="7W3A"/>
<dbReference type="PDBsum" id="7W3B"/>
<dbReference type="PDBsum" id="7W3C"/>
<dbReference type="PDBsum" id="7W3F"/>
<dbReference type="PDBsum" id="7W3G"/>
<dbReference type="PDBsum" id="7W3H"/>
<dbReference type="PDBsum" id="7W3I"/>
<dbReference type="PDBsum" id="7W3J"/>
<dbReference type="PDBsum" id="7W3K"/>
<dbReference type="PDBsum" id="7W3M"/>
<dbReference type="PDBsum" id="8BZL"/>
<dbReference type="PDBsum" id="8CVR"/>
<dbReference type="PDBsum" id="8CVS"/>
<dbReference type="PDBsum" id="8CVT"/>
<dbReference type="PDBsum" id="8CXB"/>
<dbReference type="PDBsum" id="8JRI"/>
<dbReference type="PDBsum" id="8JRT"/>
<dbReference type="PDBsum" id="8JTI"/>
<dbReference type="PDBsum" id="8K0G"/>
<dbReference type="PDBsum" id="8QYJ"/>
<dbReference type="PDBsum" id="8QYL"/>
<dbReference type="PDBsum" id="8QYM"/>
<dbReference type="PDBsum" id="8QYN"/>
<dbReference type="PDBsum" id="8QYO"/>
<dbReference type="PDBsum" id="8QYS"/>
<dbReference type="PDBsum" id="8QZ9"/>
<dbReference type="PDBsum" id="8TM3"/>
<dbReference type="PDBsum" id="8TM4"/>
<dbReference type="PDBsum" id="8TM5"/>
<dbReference type="PDBsum" id="8TM6"/>
<dbReference type="PDBsum" id="8UD9"/>
<dbReference type="PDBsum" id="8USB"/>
<dbReference type="PDBsum" id="8USC"/>
<dbReference type="PDBsum" id="8YIX"/>
<dbReference type="PDBsum" id="8YIY"/>
<dbReference type="PDBsum" id="8YIZ"/>
<dbReference type="PDBsum" id="9E8G"/>
<dbReference type="PDBsum" id="9E8H"/>
<dbReference type="PDBsum" id="9E8I"/>
<dbReference type="PDBsum" id="9E8J"/>
<dbReference type="PDBsum" id="9E8K"/>
<dbReference type="PDBsum" id="9E8L"/>
<dbReference type="PDBsum" id="9E8N"/>
<dbReference type="PDBsum" id="9E8O"/>
<dbReference type="PDBsum" id="9E8Q"/>
<dbReference type="PDBsum" id="9HMN"/>
<dbReference type="EMDB" id="EMD-0781"/>
<dbReference type="EMDB" id="EMD-12341"/>
<dbReference type="EMDB" id="EMD-13389"/>
<dbReference type="EMDB" id="EMD-14201"/>
<dbReference type="EMDB" id="EMD-14202"/>
<dbReference type="EMDB" id="EMD-14203"/>
<dbReference type="EMDB" id="EMD-14204"/>
<dbReference type="EMDB" id="EMD-14205"/>
<dbReference type="EMDB" id="EMD-14209"/>
<dbReference type="EMDB" id="EMD-14210"/>
<dbReference type="EMDB" id="EMD-14211"/>
<dbReference type="EMDB" id="EMD-18755"/>
<dbReference type="EMDB" id="EMD-18757"/>
<dbReference type="EMDB" id="EMD-18758"/>
<dbReference type="EMDB" id="EMD-18759"/>
<dbReference type="EMDB" id="EMD-18760"/>
<dbReference type="EMDB" id="EMD-18761"/>
<dbReference type="EMDB" id="EMD-18773"/>
<dbReference type="EMDB" id="EMD-21691"/>
<dbReference type="EMDB" id="EMD-21696"/>
<dbReference type="EMDB" id="EMD-22259"/>
<dbReference type="EMDB" id="EMD-23576"/>
<dbReference type="EMDB" id="EMD-24275"/>
<dbReference type="EMDB" id="EMD-24276"/>
<dbReference type="EMDB" id="EMD-24277"/>
<dbReference type="EMDB" id="EMD-24278"/>
<dbReference type="EMDB" id="EMD-27013"/>
<dbReference type="EMDB" id="EMD-27015"/>
<dbReference type="EMDB" id="EMD-27018"/>
<dbReference type="EMDB" id="EMD-2981"/>
<dbReference type="EMDB" id="EMD-31724"/>
<dbReference type="EMDB" id="EMD-31727"/>
<dbReference type="EMDB" id="EMD-32272"/>
<dbReference type="EMDB" id="EMD-32273"/>
<dbReference type="EMDB" id="EMD-32274"/>
<dbReference type="EMDB" id="EMD-32275"/>
<dbReference type="EMDB" id="EMD-32276"/>
<dbReference type="EMDB" id="EMD-32277"/>
<dbReference type="EMDB" id="EMD-32278"/>
<dbReference type="EMDB" id="EMD-32279"/>
<dbReference type="EMDB" id="EMD-32280"/>
<dbReference type="EMDB" id="EMD-32281"/>
<dbReference type="EMDB" id="EMD-32282"/>
<dbReference type="EMDB" id="EMD-32283"/>
<dbReference type="EMDB" id="EMD-32284"/>
<dbReference type="EMDB" id="EMD-36598"/>
<dbReference type="EMDB" id="EMD-36605"/>
<dbReference type="EMDB" id="EMD-36645"/>
<dbReference type="EMDB" id="EMD-36764"/>
<dbReference type="EMDB" id="EMD-39332"/>
<dbReference type="EMDB" id="EMD-39333"/>
<dbReference type="EMDB" id="EMD-39334"/>
<dbReference type="EMDB" id="EMD-4089"/>
<dbReference type="EMDB" id="EMD-41377"/>
<dbReference type="EMDB" id="EMD-41378"/>
<dbReference type="EMDB" id="EMD-41379"/>
<dbReference type="EMDB" id="EMD-41380"/>
<dbReference type="EMDB" id="EMD-4146"/>
<dbReference type="EMDB" id="EMD-42148"/>
<dbReference type="EMDB" id="EMD-42506"/>
<dbReference type="EMDB" id="EMD-42507"/>
<dbReference type="EMDB" id="EMD-4738"/>
<dbReference type="EMDB" id="EMD-47719"/>
<dbReference type="EMDB" id="EMD-47720"/>
<dbReference type="EMDB" id="EMD-47721"/>
<dbReference type="EMDB" id="EMD-47722"/>
<dbReference type="EMDB" id="EMD-47723"/>
<dbReference type="EMDB" id="EMD-47724"/>
<dbReference type="EMDB" id="EMD-47725"/>
<dbReference type="EMDB" id="EMD-47726"/>
<dbReference type="EMDB" id="EMD-47727"/>
<dbReference type="EMDB" id="EMD-4860"/>
<dbReference type="EMDB" id="EMD-4877"/>
<dbReference type="EMDB" id="EMD-52296"/>
<dbReference type="EMDB" id="EMD-60138"/>
<dbReference type="EMDB" id="EMD-60139"/>
<dbReference type="EMDB" id="EMD-7010"/>
<dbReference type="EMDB" id="EMD-8662"/>
<dbReference type="EMDB" id="EMD-8663"/>
<dbReference type="EMDB" id="EMD-8664"/>
<dbReference type="EMDB" id="EMD-8665"/>
<dbReference type="EMDB" id="EMD-8666"/>
<dbReference type="EMDB" id="EMD-8667"/>
<dbReference type="EMDB" id="EMD-8668"/>
<dbReference type="EMDB" id="EMD-9216"/>
<dbReference type="EMDB" id="EMD-9217"/>
<dbReference type="EMDB" id="EMD-9218"/>
<dbReference type="EMDB" id="EMD-9219"/>
<dbReference type="EMDB" id="EMD-9220"/>
<dbReference type="EMDB" id="EMD-9221"/>
<dbReference type="EMDB" id="EMD-9222"/>
<dbReference type="EMDB" id="EMD-9511"/>
<dbReference type="EMDB" id="EMD-9512"/>
<dbReference type="SMR" id="P28066"/>
<dbReference type="BioGRID" id="111659">
    <property type="interactions" value="353"/>
</dbReference>
<dbReference type="ComplexPortal" id="CPX-5993">
    <property type="entry name" value="26S proteasome complex"/>
</dbReference>
<dbReference type="ComplexPortal" id="CPX-8806">
    <property type="entry name" value="20S proteasome complex"/>
</dbReference>
<dbReference type="ComplexPortal" id="CPX-8841">
    <property type="entry name" value="PA200-20S single-capped proteasome"/>
</dbReference>
<dbReference type="ComplexPortal" id="CPX-8842">
    <property type="entry name" value="PA28-alphabeta double-capped 20S proteasome complex"/>
</dbReference>
<dbReference type="ComplexPortal" id="CPX-9001">
    <property type="entry name" value="PA28-gamma single-capped 20S proteasome complex"/>
</dbReference>
<dbReference type="ComplexPortal" id="CPX-9002">
    <property type="entry name" value="PA28-alphabeta single-capped 20S proteasome complex"/>
</dbReference>
<dbReference type="ComplexPortal" id="CPX-9003">
    <property type="entry name" value="20S immunoproteasome complex"/>
</dbReference>
<dbReference type="ComplexPortal" id="CPX-9004">
    <property type="entry name" value="20S thymoproteasome complex"/>
</dbReference>
<dbReference type="ComplexPortal" id="CPX-9021">
    <property type="entry name" value="20S spermatoproteasome complex"/>
</dbReference>
<dbReference type="ComplexPortal" id="CPX-9022">
    <property type="entry name" value="PA28-gamma double-capped 20S proteasome complex"/>
</dbReference>
<dbReference type="ComplexPortal" id="CPX-9063">
    <property type="entry name" value="PA200-20S-PA200 double-capped proteasome complex"/>
</dbReference>
<dbReference type="ComplexPortal" id="CPX-9082">
    <property type="entry name" value="19S-20S-PA28-alphabeta hybrid proteasome complex"/>
</dbReference>
<dbReference type="ComplexPortal" id="CPX-9085">
    <property type="entry name" value="19S-20S-PA28-gamma hybrid proteasome complex"/>
</dbReference>
<dbReference type="ComplexPortal" id="CPX-9086">
    <property type="entry name" value="30S proteasome complex"/>
</dbReference>
<dbReference type="CORUM" id="P28066"/>
<dbReference type="DIP" id="DIP-29368N"/>
<dbReference type="FunCoup" id="P28066">
    <property type="interactions" value="2063"/>
</dbReference>
<dbReference type="IntAct" id="P28066">
    <property type="interactions" value="114"/>
</dbReference>
<dbReference type="MINT" id="P28066"/>
<dbReference type="STRING" id="9606.ENSP00000271308"/>
<dbReference type="BindingDB" id="P28066"/>
<dbReference type="ChEMBL" id="CHEMBL2364701"/>
<dbReference type="DrugBank" id="DB08515">
    <property type="generic name" value="(3AR,6R,6AS)-6-((S)-((S)-CYCLOHEX-2-ENYL)(HYDROXY)METHYL)-6A-METHYL-4-OXO-HEXAHYDRO-2H-FURO[3,2-C]PYRROLE-6-CARBALDEHYDE"/>
</dbReference>
<dbReference type="MEROPS" id="T01.975"/>
<dbReference type="GlyCosmos" id="P28066">
    <property type="glycosylation" value="1 site, 1 glycan"/>
</dbReference>
<dbReference type="GlyGen" id="P28066">
    <property type="glycosylation" value="3 sites, 1 O-linked glycan (3 sites)"/>
</dbReference>
<dbReference type="iPTMnet" id="P28066"/>
<dbReference type="MetOSite" id="P28066"/>
<dbReference type="PhosphoSitePlus" id="P28066"/>
<dbReference type="SwissPalm" id="P28066"/>
<dbReference type="BioMuta" id="PSMA5"/>
<dbReference type="DMDM" id="38258905"/>
<dbReference type="REPRODUCTION-2DPAGE" id="IPI00291922"/>
<dbReference type="jPOST" id="P28066"/>
<dbReference type="MassIVE" id="P28066"/>
<dbReference type="PaxDb" id="9606-ENSP00000271308"/>
<dbReference type="PeptideAtlas" id="P28066"/>
<dbReference type="PRIDE" id="P28066"/>
<dbReference type="ProteomicsDB" id="54441">
    <molecule id="P28066-1"/>
</dbReference>
<dbReference type="ProteomicsDB" id="5854"/>
<dbReference type="Pumba" id="P28066"/>
<dbReference type="TopDownProteomics" id="P28066-1">
    <molecule id="P28066-1"/>
</dbReference>
<dbReference type="Antibodypedia" id="20062">
    <property type="antibodies" value="458 antibodies from 33 providers"/>
</dbReference>
<dbReference type="DNASU" id="5686"/>
<dbReference type="Ensembl" id="ENST00000271308.9">
    <molecule id="P28066-1"/>
    <property type="protein sequence ID" value="ENSP00000271308.4"/>
    <property type="gene ID" value="ENSG00000143106.13"/>
</dbReference>
<dbReference type="Ensembl" id="ENST00000538610.5">
    <molecule id="P28066-2"/>
    <property type="protein sequence ID" value="ENSP00000440618.1"/>
    <property type="gene ID" value="ENSG00000143106.13"/>
</dbReference>
<dbReference type="GeneID" id="5686"/>
<dbReference type="KEGG" id="hsa:5686"/>
<dbReference type="MANE-Select" id="ENST00000271308.9">
    <property type="protein sequence ID" value="ENSP00000271308.4"/>
    <property type="RefSeq nucleotide sequence ID" value="NM_002790.4"/>
    <property type="RefSeq protein sequence ID" value="NP_002781.2"/>
</dbReference>
<dbReference type="UCSC" id="uc001dxn.4">
    <molecule id="P28066-1"/>
    <property type="organism name" value="human"/>
</dbReference>
<dbReference type="AGR" id="HGNC:9534"/>
<dbReference type="CTD" id="5686"/>
<dbReference type="DisGeNET" id="5686"/>
<dbReference type="GeneCards" id="PSMA5"/>
<dbReference type="HGNC" id="HGNC:9534">
    <property type="gene designation" value="PSMA5"/>
</dbReference>
<dbReference type="HPA" id="ENSG00000143106">
    <property type="expression patterns" value="Low tissue specificity"/>
</dbReference>
<dbReference type="MIM" id="176844">
    <property type="type" value="gene"/>
</dbReference>
<dbReference type="neXtProt" id="NX_P28066"/>
<dbReference type="OpenTargets" id="ENSG00000143106"/>
<dbReference type="PharmGKB" id="PA33879"/>
<dbReference type="VEuPathDB" id="HostDB:ENSG00000143106"/>
<dbReference type="eggNOG" id="KOG0176">
    <property type="taxonomic scope" value="Eukaryota"/>
</dbReference>
<dbReference type="GeneTree" id="ENSGT00550000074958"/>
<dbReference type="HOGENOM" id="CLU_035750_4_2_1"/>
<dbReference type="InParanoid" id="P28066"/>
<dbReference type="OMA" id="RSMIDHA"/>
<dbReference type="OrthoDB" id="431557at2759"/>
<dbReference type="PAN-GO" id="P28066">
    <property type="GO annotations" value="4 GO annotations based on evolutionary models"/>
</dbReference>
<dbReference type="PhylomeDB" id="P28066"/>
<dbReference type="TreeFam" id="TF106211"/>
<dbReference type="PathwayCommons" id="P28066"/>
<dbReference type="Reactome" id="R-HSA-1169091">
    <property type="pathway name" value="Activation of NF-kappaB in B cells"/>
</dbReference>
<dbReference type="Reactome" id="R-HSA-1234176">
    <property type="pathway name" value="Oxygen-dependent proline hydroxylation of Hypoxia-inducible Factor Alpha"/>
</dbReference>
<dbReference type="Reactome" id="R-HSA-1236974">
    <property type="pathway name" value="ER-Phagosome pathway"/>
</dbReference>
<dbReference type="Reactome" id="R-HSA-1236978">
    <property type="pathway name" value="Cross-presentation of soluble exogenous antigens (endosomes)"/>
</dbReference>
<dbReference type="Reactome" id="R-HSA-174084">
    <property type="pathway name" value="Autodegradation of Cdh1 by Cdh1:APC/C"/>
</dbReference>
<dbReference type="Reactome" id="R-HSA-174113">
    <property type="pathway name" value="SCF-beta-TrCP mediated degradation of Emi1"/>
</dbReference>
<dbReference type="Reactome" id="R-HSA-174154">
    <property type="pathway name" value="APC/C:Cdc20 mediated degradation of Securin"/>
</dbReference>
<dbReference type="Reactome" id="R-HSA-174178">
    <property type="pathway name" value="APC/C:Cdh1 mediated degradation of Cdc20 and other APC/C:Cdh1 targeted proteins in late mitosis/early G1"/>
</dbReference>
<dbReference type="Reactome" id="R-HSA-174184">
    <property type="pathway name" value="Cdc20:Phospho-APC/C mediated degradation of Cyclin A"/>
</dbReference>
<dbReference type="Reactome" id="R-HSA-180534">
    <property type="pathway name" value="Vpu mediated degradation of CD4"/>
</dbReference>
<dbReference type="Reactome" id="R-HSA-180585">
    <property type="pathway name" value="Vif-mediated degradation of APOBEC3G"/>
</dbReference>
<dbReference type="Reactome" id="R-HSA-187577">
    <property type="pathway name" value="SCF(Skp2)-mediated degradation of p27/p21"/>
</dbReference>
<dbReference type="Reactome" id="R-HSA-195253">
    <property type="pathway name" value="Degradation of beta-catenin by the destruction complex"/>
</dbReference>
<dbReference type="Reactome" id="R-HSA-202424">
    <property type="pathway name" value="Downstream TCR signaling"/>
</dbReference>
<dbReference type="Reactome" id="R-HSA-211733">
    <property type="pathway name" value="Regulation of activated PAK-2p34 by proteasome mediated degradation"/>
</dbReference>
<dbReference type="Reactome" id="R-HSA-2467813">
    <property type="pathway name" value="Separation of Sister Chromatids"/>
</dbReference>
<dbReference type="Reactome" id="R-HSA-2871837">
    <property type="pathway name" value="FCERI mediated NF-kB activation"/>
</dbReference>
<dbReference type="Reactome" id="R-HSA-349425">
    <property type="pathway name" value="Autodegradation of the E3 ubiquitin ligase COP1"/>
</dbReference>
<dbReference type="Reactome" id="R-HSA-350562">
    <property type="pathway name" value="Regulation of ornithine decarboxylase (ODC)"/>
</dbReference>
<dbReference type="Reactome" id="R-HSA-382556">
    <property type="pathway name" value="ABC-family proteins mediated transport"/>
</dbReference>
<dbReference type="Reactome" id="R-HSA-450408">
    <property type="pathway name" value="AUF1 (hnRNP D0) binds and destabilizes mRNA"/>
</dbReference>
<dbReference type="Reactome" id="R-HSA-4608870">
    <property type="pathway name" value="Asymmetric localization of PCP proteins"/>
</dbReference>
<dbReference type="Reactome" id="R-HSA-4641257">
    <property type="pathway name" value="Degradation of AXIN"/>
</dbReference>
<dbReference type="Reactome" id="R-HSA-4641258">
    <property type="pathway name" value="Degradation of DVL"/>
</dbReference>
<dbReference type="Reactome" id="R-HSA-5358346">
    <property type="pathway name" value="Hedgehog ligand biogenesis"/>
</dbReference>
<dbReference type="Reactome" id="R-HSA-5362768">
    <property type="pathway name" value="Hh mutants are degraded by ERAD"/>
</dbReference>
<dbReference type="Reactome" id="R-HSA-5607761">
    <property type="pathway name" value="Dectin-1 mediated noncanonical NF-kB signaling"/>
</dbReference>
<dbReference type="Reactome" id="R-HSA-5607764">
    <property type="pathway name" value="CLEC7A (Dectin-1) signaling"/>
</dbReference>
<dbReference type="Reactome" id="R-HSA-5610780">
    <property type="pathway name" value="Degradation of GLI1 by the proteasome"/>
</dbReference>
<dbReference type="Reactome" id="R-HSA-5610783">
    <property type="pathway name" value="Degradation of GLI2 by the proteasome"/>
</dbReference>
<dbReference type="Reactome" id="R-HSA-5610785">
    <property type="pathway name" value="GLI3 is processed to GLI3R by the proteasome"/>
</dbReference>
<dbReference type="Reactome" id="R-HSA-5632684">
    <property type="pathway name" value="Hedgehog 'on' state"/>
</dbReference>
<dbReference type="Reactome" id="R-HSA-5658442">
    <property type="pathway name" value="Regulation of RAS by GAPs"/>
</dbReference>
<dbReference type="Reactome" id="R-HSA-5668541">
    <property type="pathway name" value="TNFR2 non-canonical NF-kB pathway"/>
</dbReference>
<dbReference type="Reactome" id="R-HSA-5676590">
    <property type="pathway name" value="NIK--&gt;noncanonical NF-kB signaling"/>
</dbReference>
<dbReference type="Reactome" id="R-HSA-5678895">
    <property type="pathway name" value="Defective CFTR causes cystic fibrosis"/>
</dbReference>
<dbReference type="Reactome" id="R-HSA-5687128">
    <property type="pathway name" value="MAPK6/MAPK4 signaling"/>
</dbReference>
<dbReference type="Reactome" id="R-HSA-5689603">
    <property type="pathway name" value="UCH proteinases"/>
</dbReference>
<dbReference type="Reactome" id="R-HSA-5689880">
    <property type="pathway name" value="Ub-specific processing proteases"/>
</dbReference>
<dbReference type="Reactome" id="R-HSA-6798695">
    <property type="pathway name" value="Neutrophil degranulation"/>
</dbReference>
<dbReference type="Reactome" id="R-HSA-68867">
    <property type="pathway name" value="Assembly of the pre-replicative complex"/>
</dbReference>
<dbReference type="Reactome" id="R-HSA-68949">
    <property type="pathway name" value="Orc1 removal from chromatin"/>
</dbReference>
<dbReference type="Reactome" id="R-HSA-69017">
    <property type="pathway name" value="CDK-mediated phosphorylation and removal of Cdc6"/>
</dbReference>
<dbReference type="Reactome" id="R-HSA-69481">
    <property type="pathway name" value="G2/M Checkpoints"/>
</dbReference>
<dbReference type="Reactome" id="R-HSA-69601">
    <property type="pathway name" value="Ubiquitin Mediated Degradation of Phosphorylated Cdc25A"/>
</dbReference>
<dbReference type="Reactome" id="R-HSA-75815">
    <property type="pathway name" value="Ubiquitin-dependent degradation of Cyclin D"/>
</dbReference>
<dbReference type="Reactome" id="R-HSA-8852276">
    <property type="pathway name" value="The role of GTSE1 in G2/M progression after G2 checkpoint"/>
</dbReference>
<dbReference type="Reactome" id="R-HSA-8854050">
    <property type="pathway name" value="FBXL7 down-regulates AURKA during mitotic entry and in early mitosis"/>
</dbReference>
<dbReference type="Reactome" id="R-HSA-8939236">
    <property type="pathway name" value="RUNX1 regulates transcription of genes involved in differentiation of HSCs"/>
</dbReference>
<dbReference type="Reactome" id="R-HSA-8939902">
    <property type="pathway name" value="Regulation of RUNX2 expression and activity"/>
</dbReference>
<dbReference type="Reactome" id="R-HSA-8941858">
    <property type="pathway name" value="Regulation of RUNX3 expression and activity"/>
</dbReference>
<dbReference type="Reactome" id="R-HSA-8948751">
    <property type="pathway name" value="Regulation of PTEN stability and activity"/>
</dbReference>
<dbReference type="Reactome" id="R-HSA-8951664">
    <property type="pathway name" value="Neddylation"/>
</dbReference>
<dbReference type="Reactome" id="R-HSA-9010553">
    <property type="pathway name" value="Regulation of expression of SLITs and ROBOs"/>
</dbReference>
<dbReference type="Reactome" id="R-HSA-9020702">
    <property type="pathway name" value="Interleukin-1 signaling"/>
</dbReference>
<dbReference type="Reactome" id="R-HSA-9604323">
    <property type="pathway name" value="Negative regulation of NOTCH4 signaling"/>
</dbReference>
<dbReference type="Reactome" id="R-HSA-9755511">
    <property type="pathway name" value="KEAP1-NFE2L2 pathway"/>
</dbReference>
<dbReference type="Reactome" id="R-HSA-9762114">
    <property type="pathway name" value="GSK3B and BTRC:CUL1-mediated-degradation of NFE2L2"/>
</dbReference>
<dbReference type="Reactome" id="R-HSA-9824272">
    <property type="pathway name" value="Somitogenesis"/>
</dbReference>
<dbReference type="Reactome" id="R-HSA-983168">
    <property type="pathway name" value="Antigen processing: Ubiquitination &amp; Proteasome degradation"/>
</dbReference>
<dbReference type="Reactome" id="R-HSA-9907900">
    <property type="pathway name" value="Proteasome assembly"/>
</dbReference>
<dbReference type="SignaLink" id="P28066"/>
<dbReference type="SIGNOR" id="P28066"/>
<dbReference type="BioGRID-ORCS" id="5686">
    <property type="hits" value="834 hits in 1174 CRISPR screens"/>
</dbReference>
<dbReference type="CD-CODE" id="91857CE7">
    <property type="entry name" value="Nucleolus"/>
</dbReference>
<dbReference type="ChiTaRS" id="PSMA5">
    <property type="organism name" value="human"/>
</dbReference>
<dbReference type="EvolutionaryTrace" id="P28066"/>
<dbReference type="GeneWiki" id="PSMA5"/>
<dbReference type="GenomeRNAi" id="5686"/>
<dbReference type="Pharos" id="P28066">
    <property type="development level" value="Tbio"/>
</dbReference>
<dbReference type="PRO" id="PR:P28066"/>
<dbReference type="Proteomes" id="UP000005640">
    <property type="component" value="Chromosome 1"/>
</dbReference>
<dbReference type="RNAct" id="P28066">
    <property type="molecule type" value="protein"/>
</dbReference>
<dbReference type="Bgee" id="ENSG00000143106">
    <property type="expression patterns" value="Expressed in oocyte and 208 other cell types or tissues"/>
</dbReference>
<dbReference type="ExpressionAtlas" id="P28066">
    <property type="expression patterns" value="baseline and differential"/>
</dbReference>
<dbReference type="GO" id="GO:0005737">
    <property type="term" value="C:cytoplasm"/>
    <property type="evidence" value="ECO:0000314"/>
    <property type="project" value="UniProtKB"/>
</dbReference>
<dbReference type="GO" id="GO:0005829">
    <property type="term" value="C:cytosol"/>
    <property type="evidence" value="ECO:0000314"/>
    <property type="project" value="HPA"/>
</dbReference>
<dbReference type="GO" id="GO:0070062">
    <property type="term" value="C:extracellular exosome"/>
    <property type="evidence" value="ECO:0007005"/>
    <property type="project" value="UniProtKB"/>
</dbReference>
<dbReference type="GO" id="GO:0005576">
    <property type="term" value="C:extracellular region"/>
    <property type="evidence" value="ECO:0000304"/>
    <property type="project" value="Reactome"/>
</dbReference>
<dbReference type="GO" id="GO:1904813">
    <property type="term" value="C:ficolin-1-rich granule lumen"/>
    <property type="evidence" value="ECO:0000304"/>
    <property type="project" value="Reactome"/>
</dbReference>
<dbReference type="GO" id="GO:0005654">
    <property type="term" value="C:nucleoplasm"/>
    <property type="evidence" value="ECO:0000304"/>
    <property type="project" value="Reactome"/>
</dbReference>
<dbReference type="GO" id="GO:0005634">
    <property type="term" value="C:nucleus"/>
    <property type="evidence" value="ECO:0000314"/>
    <property type="project" value="UniProtKB"/>
</dbReference>
<dbReference type="GO" id="GO:0000502">
    <property type="term" value="C:proteasome complex"/>
    <property type="evidence" value="ECO:0000314"/>
    <property type="project" value="UniProtKB"/>
</dbReference>
<dbReference type="GO" id="GO:0005839">
    <property type="term" value="C:proteasome core complex"/>
    <property type="evidence" value="ECO:0000314"/>
    <property type="project" value="UniProtKB"/>
</dbReference>
<dbReference type="GO" id="GO:0019773">
    <property type="term" value="C:proteasome core complex, alpha-subunit complex"/>
    <property type="evidence" value="ECO:0000314"/>
    <property type="project" value="UniProtKB"/>
</dbReference>
<dbReference type="GO" id="GO:0034774">
    <property type="term" value="C:secretory granule lumen"/>
    <property type="evidence" value="ECO:0000304"/>
    <property type="project" value="Reactome"/>
</dbReference>
<dbReference type="GO" id="GO:0043161">
    <property type="term" value="P:proteasome-mediated ubiquitin-dependent protein catabolic process"/>
    <property type="evidence" value="ECO:0000318"/>
    <property type="project" value="GO_Central"/>
</dbReference>
<dbReference type="CDD" id="cd03753">
    <property type="entry name" value="proteasome_alpha_type_5"/>
    <property type="match status" value="1"/>
</dbReference>
<dbReference type="FunFam" id="3.60.20.10:FF:000019">
    <property type="entry name" value="Proteasome subunit alpha type"/>
    <property type="match status" value="1"/>
</dbReference>
<dbReference type="Gene3D" id="3.60.20.10">
    <property type="entry name" value="Glutamine Phosphoribosylpyrophosphate, subunit 1, domain 1"/>
    <property type="match status" value="1"/>
</dbReference>
<dbReference type="InterPro" id="IPR029055">
    <property type="entry name" value="Ntn_hydrolases_N"/>
</dbReference>
<dbReference type="InterPro" id="IPR050115">
    <property type="entry name" value="Proteasome_alpha"/>
</dbReference>
<dbReference type="InterPro" id="IPR023332">
    <property type="entry name" value="Proteasome_alpha-type"/>
</dbReference>
<dbReference type="InterPro" id="IPR033812">
    <property type="entry name" value="Proteasome_alpha_type_5"/>
</dbReference>
<dbReference type="InterPro" id="IPR000426">
    <property type="entry name" value="Proteasome_asu_N"/>
</dbReference>
<dbReference type="InterPro" id="IPR001353">
    <property type="entry name" value="Proteasome_sua/b"/>
</dbReference>
<dbReference type="NCBIfam" id="NF003075">
    <property type="entry name" value="PRK03996.1"/>
    <property type="match status" value="1"/>
</dbReference>
<dbReference type="PANTHER" id="PTHR11599">
    <property type="entry name" value="PROTEASOME SUBUNIT ALPHA/BETA"/>
    <property type="match status" value="1"/>
</dbReference>
<dbReference type="Pfam" id="PF00227">
    <property type="entry name" value="Proteasome"/>
    <property type="match status" value="1"/>
</dbReference>
<dbReference type="Pfam" id="PF10584">
    <property type="entry name" value="Proteasome_A_N"/>
    <property type="match status" value="1"/>
</dbReference>
<dbReference type="SMART" id="SM00948">
    <property type="entry name" value="Proteasome_A_N"/>
    <property type="match status" value="1"/>
</dbReference>
<dbReference type="SUPFAM" id="SSF56235">
    <property type="entry name" value="N-terminal nucleophile aminohydrolases (Ntn hydrolases)"/>
    <property type="match status" value="1"/>
</dbReference>
<dbReference type="PROSITE" id="PS00388">
    <property type="entry name" value="PROTEASOME_ALPHA_1"/>
    <property type="match status" value="1"/>
</dbReference>
<dbReference type="PROSITE" id="PS51475">
    <property type="entry name" value="PROTEASOME_ALPHA_2"/>
    <property type="match status" value="1"/>
</dbReference>
<name>PSA5_HUMAN</name>
<proteinExistence type="evidence at protein level"/>
<reference key="1">
    <citation type="journal article" date="1991" name="Biochim. Biophys. Acta">
        <title>The primary structures of four subunits of the human, high-molecular-weight proteinase, macropain (proteasome), are distinct but homologous.</title>
        <authorList>
            <person name="DeMartino G.N."/>
            <person name="Orth K."/>
            <person name="McCullough M.L."/>
            <person name="Lee L.W."/>
            <person name="Munn T.Z."/>
            <person name="Moomaw C.R."/>
            <person name="Dawson P.A."/>
            <person name="Slaughter C.A."/>
        </authorList>
    </citation>
    <scope>NUCLEOTIDE SEQUENCE [MRNA] (ISOFORM 1)</scope>
</reference>
<reference key="2">
    <citation type="submission" date="2004-06" db="EMBL/GenBank/DDBJ databases">
        <title>Cloning of human full open reading frames in Gateway(TM) system entry vector (pDONR201).</title>
        <authorList>
            <person name="Ebert L."/>
            <person name="Schick M."/>
            <person name="Neubert P."/>
            <person name="Schatten R."/>
            <person name="Henze S."/>
            <person name="Korn B."/>
        </authorList>
    </citation>
    <scope>NUCLEOTIDE SEQUENCE [LARGE SCALE MRNA] (ISOFORM 1)</scope>
</reference>
<reference key="3">
    <citation type="journal article" date="2004" name="Nat. Genet.">
        <title>Complete sequencing and characterization of 21,243 full-length human cDNAs.</title>
        <authorList>
            <person name="Ota T."/>
            <person name="Suzuki Y."/>
            <person name="Nishikawa T."/>
            <person name="Otsuki T."/>
            <person name="Sugiyama T."/>
            <person name="Irie R."/>
            <person name="Wakamatsu A."/>
            <person name="Hayashi K."/>
            <person name="Sato H."/>
            <person name="Nagai K."/>
            <person name="Kimura K."/>
            <person name="Makita H."/>
            <person name="Sekine M."/>
            <person name="Obayashi M."/>
            <person name="Nishi T."/>
            <person name="Shibahara T."/>
            <person name="Tanaka T."/>
            <person name="Ishii S."/>
            <person name="Yamamoto J."/>
            <person name="Saito K."/>
            <person name="Kawai Y."/>
            <person name="Isono Y."/>
            <person name="Nakamura Y."/>
            <person name="Nagahari K."/>
            <person name="Murakami K."/>
            <person name="Yasuda T."/>
            <person name="Iwayanagi T."/>
            <person name="Wagatsuma M."/>
            <person name="Shiratori A."/>
            <person name="Sudo H."/>
            <person name="Hosoiri T."/>
            <person name="Kaku Y."/>
            <person name="Kodaira H."/>
            <person name="Kondo H."/>
            <person name="Sugawara M."/>
            <person name="Takahashi M."/>
            <person name="Kanda K."/>
            <person name="Yokoi T."/>
            <person name="Furuya T."/>
            <person name="Kikkawa E."/>
            <person name="Omura Y."/>
            <person name="Abe K."/>
            <person name="Kamihara K."/>
            <person name="Katsuta N."/>
            <person name="Sato K."/>
            <person name="Tanikawa M."/>
            <person name="Yamazaki M."/>
            <person name="Ninomiya K."/>
            <person name="Ishibashi T."/>
            <person name="Yamashita H."/>
            <person name="Murakawa K."/>
            <person name="Fujimori K."/>
            <person name="Tanai H."/>
            <person name="Kimata M."/>
            <person name="Watanabe M."/>
            <person name="Hiraoka S."/>
            <person name="Chiba Y."/>
            <person name="Ishida S."/>
            <person name="Ono Y."/>
            <person name="Takiguchi S."/>
            <person name="Watanabe S."/>
            <person name="Yosida M."/>
            <person name="Hotuta T."/>
            <person name="Kusano J."/>
            <person name="Kanehori K."/>
            <person name="Takahashi-Fujii A."/>
            <person name="Hara H."/>
            <person name="Tanase T.-O."/>
            <person name="Nomura Y."/>
            <person name="Togiya S."/>
            <person name="Komai F."/>
            <person name="Hara R."/>
            <person name="Takeuchi K."/>
            <person name="Arita M."/>
            <person name="Imose N."/>
            <person name="Musashino K."/>
            <person name="Yuuki H."/>
            <person name="Oshima A."/>
            <person name="Sasaki N."/>
            <person name="Aotsuka S."/>
            <person name="Yoshikawa Y."/>
            <person name="Matsunawa H."/>
            <person name="Ichihara T."/>
            <person name="Shiohata N."/>
            <person name="Sano S."/>
            <person name="Moriya S."/>
            <person name="Momiyama H."/>
            <person name="Satoh N."/>
            <person name="Takami S."/>
            <person name="Terashima Y."/>
            <person name="Suzuki O."/>
            <person name="Nakagawa S."/>
            <person name="Senoh A."/>
            <person name="Mizoguchi H."/>
            <person name="Goto Y."/>
            <person name="Shimizu F."/>
            <person name="Wakebe H."/>
            <person name="Hishigaki H."/>
            <person name="Watanabe T."/>
            <person name="Sugiyama A."/>
            <person name="Takemoto M."/>
            <person name="Kawakami B."/>
            <person name="Yamazaki M."/>
            <person name="Watanabe K."/>
            <person name="Kumagai A."/>
            <person name="Itakura S."/>
            <person name="Fukuzumi Y."/>
            <person name="Fujimori Y."/>
            <person name="Komiyama M."/>
            <person name="Tashiro H."/>
            <person name="Tanigami A."/>
            <person name="Fujiwara T."/>
            <person name="Ono T."/>
            <person name="Yamada K."/>
            <person name="Fujii Y."/>
            <person name="Ozaki K."/>
            <person name="Hirao M."/>
            <person name="Ohmori Y."/>
            <person name="Kawabata A."/>
            <person name="Hikiji T."/>
            <person name="Kobatake N."/>
            <person name="Inagaki H."/>
            <person name="Ikema Y."/>
            <person name="Okamoto S."/>
            <person name="Okitani R."/>
            <person name="Kawakami T."/>
            <person name="Noguchi S."/>
            <person name="Itoh T."/>
            <person name="Shigeta K."/>
            <person name="Senba T."/>
            <person name="Matsumura K."/>
            <person name="Nakajima Y."/>
            <person name="Mizuno T."/>
            <person name="Morinaga M."/>
            <person name="Sasaki M."/>
            <person name="Togashi T."/>
            <person name="Oyama M."/>
            <person name="Hata H."/>
            <person name="Watanabe M."/>
            <person name="Komatsu T."/>
            <person name="Mizushima-Sugano J."/>
            <person name="Satoh T."/>
            <person name="Shirai Y."/>
            <person name="Takahashi Y."/>
            <person name="Nakagawa K."/>
            <person name="Okumura K."/>
            <person name="Nagase T."/>
            <person name="Nomura N."/>
            <person name="Kikuchi H."/>
            <person name="Masuho Y."/>
            <person name="Yamashita R."/>
            <person name="Nakai K."/>
            <person name="Yada T."/>
            <person name="Nakamura Y."/>
            <person name="Ohara O."/>
            <person name="Isogai T."/>
            <person name="Sugano S."/>
        </authorList>
    </citation>
    <scope>NUCLEOTIDE SEQUENCE [LARGE SCALE MRNA] (ISOFORMS 1 AND 2)</scope>
    <source>
        <tissue>Testis</tissue>
        <tissue>Trachea</tissue>
    </source>
</reference>
<reference key="4">
    <citation type="journal article" date="2006" name="Nature">
        <title>The DNA sequence and biological annotation of human chromosome 1.</title>
        <authorList>
            <person name="Gregory S.G."/>
            <person name="Barlow K.F."/>
            <person name="McLay K.E."/>
            <person name="Kaul R."/>
            <person name="Swarbreck D."/>
            <person name="Dunham A."/>
            <person name="Scott C.E."/>
            <person name="Howe K.L."/>
            <person name="Woodfine K."/>
            <person name="Spencer C.C.A."/>
            <person name="Jones M.C."/>
            <person name="Gillson C."/>
            <person name="Searle S."/>
            <person name="Zhou Y."/>
            <person name="Kokocinski F."/>
            <person name="McDonald L."/>
            <person name="Evans R."/>
            <person name="Phillips K."/>
            <person name="Atkinson A."/>
            <person name="Cooper R."/>
            <person name="Jones C."/>
            <person name="Hall R.E."/>
            <person name="Andrews T.D."/>
            <person name="Lloyd C."/>
            <person name="Ainscough R."/>
            <person name="Almeida J.P."/>
            <person name="Ambrose K.D."/>
            <person name="Anderson F."/>
            <person name="Andrew R.W."/>
            <person name="Ashwell R.I.S."/>
            <person name="Aubin K."/>
            <person name="Babbage A.K."/>
            <person name="Bagguley C.L."/>
            <person name="Bailey J."/>
            <person name="Beasley H."/>
            <person name="Bethel G."/>
            <person name="Bird C.P."/>
            <person name="Bray-Allen S."/>
            <person name="Brown J.Y."/>
            <person name="Brown A.J."/>
            <person name="Buckley D."/>
            <person name="Burton J."/>
            <person name="Bye J."/>
            <person name="Carder C."/>
            <person name="Chapman J.C."/>
            <person name="Clark S.Y."/>
            <person name="Clarke G."/>
            <person name="Clee C."/>
            <person name="Cobley V."/>
            <person name="Collier R.E."/>
            <person name="Corby N."/>
            <person name="Coville G.J."/>
            <person name="Davies J."/>
            <person name="Deadman R."/>
            <person name="Dunn M."/>
            <person name="Earthrowl M."/>
            <person name="Ellington A.G."/>
            <person name="Errington H."/>
            <person name="Frankish A."/>
            <person name="Frankland J."/>
            <person name="French L."/>
            <person name="Garner P."/>
            <person name="Garnett J."/>
            <person name="Gay L."/>
            <person name="Ghori M.R.J."/>
            <person name="Gibson R."/>
            <person name="Gilby L.M."/>
            <person name="Gillett W."/>
            <person name="Glithero R.J."/>
            <person name="Grafham D.V."/>
            <person name="Griffiths C."/>
            <person name="Griffiths-Jones S."/>
            <person name="Grocock R."/>
            <person name="Hammond S."/>
            <person name="Harrison E.S.I."/>
            <person name="Hart E."/>
            <person name="Haugen E."/>
            <person name="Heath P.D."/>
            <person name="Holmes S."/>
            <person name="Holt K."/>
            <person name="Howden P.J."/>
            <person name="Hunt A.R."/>
            <person name="Hunt S.E."/>
            <person name="Hunter G."/>
            <person name="Isherwood J."/>
            <person name="James R."/>
            <person name="Johnson C."/>
            <person name="Johnson D."/>
            <person name="Joy A."/>
            <person name="Kay M."/>
            <person name="Kershaw J.K."/>
            <person name="Kibukawa M."/>
            <person name="Kimberley A.M."/>
            <person name="King A."/>
            <person name="Knights A.J."/>
            <person name="Lad H."/>
            <person name="Laird G."/>
            <person name="Lawlor S."/>
            <person name="Leongamornlert D.A."/>
            <person name="Lloyd D.M."/>
            <person name="Loveland J."/>
            <person name="Lovell J."/>
            <person name="Lush M.J."/>
            <person name="Lyne R."/>
            <person name="Martin S."/>
            <person name="Mashreghi-Mohammadi M."/>
            <person name="Matthews L."/>
            <person name="Matthews N.S.W."/>
            <person name="McLaren S."/>
            <person name="Milne S."/>
            <person name="Mistry S."/>
            <person name="Moore M.J.F."/>
            <person name="Nickerson T."/>
            <person name="O'Dell C.N."/>
            <person name="Oliver K."/>
            <person name="Palmeiri A."/>
            <person name="Palmer S.A."/>
            <person name="Parker A."/>
            <person name="Patel D."/>
            <person name="Pearce A.V."/>
            <person name="Peck A.I."/>
            <person name="Pelan S."/>
            <person name="Phelps K."/>
            <person name="Phillimore B.J."/>
            <person name="Plumb R."/>
            <person name="Rajan J."/>
            <person name="Raymond C."/>
            <person name="Rouse G."/>
            <person name="Saenphimmachak C."/>
            <person name="Sehra H.K."/>
            <person name="Sheridan E."/>
            <person name="Shownkeen R."/>
            <person name="Sims S."/>
            <person name="Skuce C.D."/>
            <person name="Smith M."/>
            <person name="Steward C."/>
            <person name="Subramanian S."/>
            <person name="Sycamore N."/>
            <person name="Tracey A."/>
            <person name="Tromans A."/>
            <person name="Van Helmond Z."/>
            <person name="Wall M."/>
            <person name="Wallis J.M."/>
            <person name="White S."/>
            <person name="Whitehead S.L."/>
            <person name="Wilkinson J.E."/>
            <person name="Willey D.L."/>
            <person name="Williams H."/>
            <person name="Wilming L."/>
            <person name="Wray P.W."/>
            <person name="Wu Z."/>
            <person name="Coulson A."/>
            <person name="Vaudin M."/>
            <person name="Sulston J.E."/>
            <person name="Durbin R.M."/>
            <person name="Hubbard T."/>
            <person name="Wooster R."/>
            <person name="Dunham I."/>
            <person name="Carter N.P."/>
            <person name="McVean G."/>
            <person name="Ross M.T."/>
            <person name="Harrow J."/>
            <person name="Olson M.V."/>
            <person name="Beck S."/>
            <person name="Rogers J."/>
            <person name="Bentley D.R."/>
        </authorList>
    </citation>
    <scope>NUCLEOTIDE SEQUENCE [LARGE SCALE GENOMIC DNA]</scope>
</reference>
<reference key="5">
    <citation type="submission" date="2005-07" db="EMBL/GenBank/DDBJ databases">
        <authorList>
            <person name="Mural R.J."/>
            <person name="Istrail S."/>
            <person name="Sutton G.G."/>
            <person name="Florea L."/>
            <person name="Halpern A.L."/>
            <person name="Mobarry C.M."/>
            <person name="Lippert R."/>
            <person name="Walenz B."/>
            <person name="Shatkay H."/>
            <person name="Dew I."/>
            <person name="Miller J.R."/>
            <person name="Flanigan M.J."/>
            <person name="Edwards N.J."/>
            <person name="Bolanos R."/>
            <person name="Fasulo D."/>
            <person name="Halldorsson B.V."/>
            <person name="Hannenhalli S."/>
            <person name="Turner R."/>
            <person name="Yooseph S."/>
            <person name="Lu F."/>
            <person name="Nusskern D.R."/>
            <person name="Shue B.C."/>
            <person name="Zheng X.H."/>
            <person name="Zhong F."/>
            <person name="Delcher A.L."/>
            <person name="Huson D.H."/>
            <person name="Kravitz S.A."/>
            <person name="Mouchard L."/>
            <person name="Reinert K."/>
            <person name="Remington K.A."/>
            <person name="Clark A.G."/>
            <person name="Waterman M.S."/>
            <person name="Eichler E.E."/>
            <person name="Adams M.D."/>
            <person name="Hunkapiller M.W."/>
            <person name="Myers E.W."/>
            <person name="Venter J.C."/>
        </authorList>
    </citation>
    <scope>NUCLEOTIDE SEQUENCE [LARGE SCALE GENOMIC DNA]</scope>
</reference>
<reference key="6">
    <citation type="journal article" date="2004" name="Genome Res.">
        <title>The status, quality, and expansion of the NIH full-length cDNA project: the Mammalian Gene Collection (MGC).</title>
        <authorList>
            <consortium name="The MGC Project Team"/>
        </authorList>
    </citation>
    <scope>NUCLEOTIDE SEQUENCE [LARGE SCALE MRNA] (ISOFORM 1)</scope>
</reference>
<reference key="7">
    <citation type="journal article" date="1992" name="Electrophoresis">
        <title>Microsequences of 145 proteins recorded in the two-dimensional gel protein database of normal human epidermal keratinocytes.</title>
        <authorList>
            <person name="Rasmussen H.H."/>
            <person name="van Damme J."/>
            <person name="Puype M."/>
            <person name="Gesser B."/>
            <person name="Celis J.E."/>
            <person name="Vandekerckhove J."/>
        </authorList>
    </citation>
    <scope>PROTEIN SEQUENCE OF 54-58; 67-73; 94-99 AND 120-128</scope>
    <source>
        <tissue>Keratinocyte</tissue>
    </source>
</reference>
<reference key="8">
    <citation type="submission" date="2003-10" db="UniProtKB">
        <authorList>
            <person name="Bienvenut W.V."/>
            <person name="Vuadens F."/>
            <person name="Crettaz D."/>
            <person name="Tissot J.-D."/>
            <person name="Quadroni M."/>
        </authorList>
    </citation>
    <scope>PROTEIN SEQUENCE OF 169-187</scope>
</reference>
<reference key="9">
    <citation type="journal article" date="1996" name="Nature">
        <title>A role for the proteasome regulator PA28alpha in antigen presentation.</title>
        <authorList>
            <person name="Groettrup M."/>
            <person name="Soza A."/>
            <person name="Eggers M."/>
            <person name="Kuehn L."/>
            <person name="Dick T.P."/>
            <person name="Schild H."/>
            <person name="Rammensee H.G."/>
            <person name="Koszinowski U.H."/>
            <person name="Kloetzel P.M."/>
        </authorList>
    </citation>
    <scope>FUNCTION IN ANTIGEN PRESENTATION</scope>
</reference>
<reference key="10">
    <citation type="journal article" date="2001" name="J. Neural Transm.">
        <title>Selective upregulation of the ubiquitin-proteasome proteolytic pathway proteins, proteasome zeta chain and isopeptidase T in fetal Down syndrome.</title>
        <authorList>
            <person name="Engidawork E."/>
            <person name="Juranville J.F."/>
            <person name="Fountoulakis M."/>
            <person name="Dierssen M."/>
            <person name="Lubec G."/>
        </authorList>
    </citation>
    <scope>INDUCTION</scope>
    <scope>TISSUE SPECIFICITY</scope>
    <scope>IDENTIFICATION BY MASS SPECTROMETRY</scope>
</reference>
<reference key="11">
    <citation type="journal article" date="2002" name="Mol. Biol. Cell">
        <title>Clastosome: a subtype of nuclear body enriched in 19S and 20S proteasomes, ubiquitin, and protein substrates of proteasome.</title>
        <authorList>
            <person name="Lafarga M."/>
            <person name="Berciano M.T."/>
            <person name="Pena E."/>
            <person name="Mayo I."/>
            <person name="Castano J.G."/>
            <person name="Bohmann D."/>
            <person name="Rodrigues J.P."/>
            <person name="Tavanez J.P."/>
            <person name="Carmo-Fonseca M."/>
        </authorList>
    </citation>
    <scope>SUBCELLULAR LOCATION</scope>
</reference>
<reference key="12">
    <citation type="journal article" date="2004" name="Biomacromolecules">
        <title>20S proteasome prevents aggregation of heat-denatured proteins without PA700 regulatory subcomplex like a molecular chaperone.</title>
        <authorList>
            <person name="Yano M."/>
            <person name="Koumoto Y."/>
            <person name="Kanesaki Y."/>
            <person name="Wu X."/>
            <person name="Kido H."/>
        </authorList>
    </citation>
    <scope>FUNCTION</scope>
</reference>
<reference key="13">
    <citation type="journal article" date="2005" name="Nature">
        <title>A heterodimeric complex that promotes the assembly of mammalian 20S proteasomes.</title>
        <authorList>
            <person name="Hirano Y."/>
            <person name="Hendil K.B."/>
            <person name="Yashiroda H."/>
            <person name="Iemura S."/>
            <person name="Nagane R."/>
            <person name="Hioki Y."/>
            <person name="Natsume T."/>
            <person name="Tanaka K."/>
            <person name="Murata S."/>
        </authorList>
    </citation>
    <scope>INTERACTION WITH PSMG1 AND PSMG2</scope>
</reference>
<reference key="14">
    <citation type="journal article" date="2006" name="Cell">
        <title>Global, in vivo, and site-specific phosphorylation dynamics in signaling networks.</title>
        <authorList>
            <person name="Olsen J.V."/>
            <person name="Blagoev B."/>
            <person name="Gnad F."/>
            <person name="Macek B."/>
            <person name="Kumar C."/>
            <person name="Mortensen P."/>
            <person name="Mann M."/>
        </authorList>
    </citation>
    <scope>IDENTIFICATION BY MASS SPECTROMETRY [LARGE SCALE ANALYSIS]</scope>
    <source>
        <tissue>Cervix carcinoma</tissue>
    </source>
</reference>
<reference key="15">
    <citation type="journal article" date="2006" name="Nat. Biotechnol.">
        <title>A probability-based approach for high-throughput protein phosphorylation analysis and site localization.</title>
        <authorList>
            <person name="Beausoleil S.A."/>
            <person name="Villen J."/>
            <person name="Gerber S.A."/>
            <person name="Rush J."/>
            <person name="Gygi S.P."/>
        </authorList>
    </citation>
    <scope>PHOSPHORYLATION [LARGE SCALE ANALYSIS] AT SER-16</scope>
    <scope>IDENTIFICATION BY MASS SPECTROMETRY [LARGE SCALE ANALYSIS]</scope>
    <source>
        <tissue>Cervix carcinoma</tissue>
    </source>
</reference>
<reference key="16">
    <citation type="journal article" date="2007" name="Biochemistry">
        <title>Mass spectrometric characterization of the affinity-purified human 26S proteasome complex.</title>
        <authorList>
            <person name="Wang X."/>
            <person name="Chen C.-F."/>
            <person name="Baker P.R."/>
            <person name="Chen P.-L."/>
            <person name="Kaiser P."/>
            <person name="Huang L."/>
        </authorList>
    </citation>
    <scope>IDENTIFICATION BY MASS SPECTROMETRY [LARGE SCALE ANALYSIS]</scope>
    <source>
        <tissue>Embryonic kidney</tissue>
    </source>
</reference>
<reference key="17">
    <citation type="journal article" date="2008" name="Mol. Cell">
        <title>Kinase-selective enrichment enables quantitative phosphoproteomics of the kinome across the cell cycle.</title>
        <authorList>
            <person name="Daub H."/>
            <person name="Olsen J.V."/>
            <person name="Bairlein M."/>
            <person name="Gnad F."/>
            <person name="Oppermann F.S."/>
            <person name="Korner R."/>
            <person name="Greff Z."/>
            <person name="Keri G."/>
            <person name="Stemmann O."/>
            <person name="Mann M."/>
        </authorList>
    </citation>
    <scope>IDENTIFICATION BY MASS SPECTROMETRY [LARGE SCALE ANALYSIS]</scope>
    <source>
        <tissue>Cervix carcinoma</tissue>
    </source>
</reference>
<reference key="18">
    <citation type="journal article" date="2008" name="Proc. Natl. Acad. Sci. U.S.A.">
        <title>A quantitative atlas of mitotic phosphorylation.</title>
        <authorList>
            <person name="Dephoure N."/>
            <person name="Zhou C."/>
            <person name="Villen J."/>
            <person name="Beausoleil S.A."/>
            <person name="Bakalarski C.E."/>
            <person name="Elledge S.J."/>
            <person name="Gygi S.P."/>
        </authorList>
    </citation>
    <scope>PHOSPHORYLATION [LARGE SCALE ANALYSIS] AT SER-16 AND THR-55</scope>
    <scope>IDENTIFICATION BY MASS SPECTROMETRY [LARGE SCALE ANALYSIS]</scope>
    <source>
        <tissue>Cervix carcinoma</tissue>
    </source>
</reference>
<reference key="19">
    <citation type="journal article" date="2009" name="Anal. Chem.">
        <title>Lys-N and trypsin cover complementary parts of the phosphoproteome in a refined SCX-based approach.</title>
        <authorList>
            <person name="Gauci S."/>
            <person name="Helbig A.O."/>
            <person name="Slijper M."/>
            <person name="Krijgsveld J."/>
            <person name="Heck A.J."/>
            <person name="Mohammed S."/>
        </authorList>
    </citation>
    <scope>IDENTIFICATION BY MASS SPECTROMETRY [LARGE SCALE ANALYSIS]</scope>
</reference>
<reference key="20">
    <citation type="journal article" date="2009" name="Oncogene">
        <title>Increased proteasome subunit protein expression and proteasome activity in colon cancer relate to an enhanced activation of nuclear factor E2-related factor 2 (Nrf2).</title>
        <authorList>
            <person name="Arlt A."/>
            <person name="Bauer I."/>
            <person name="Schafmayer C."/>
            <person name="Tepel J."/>
            <person name="Mueerkoester S.S."/>
            <person name="Brosch M."/>
            <person name="Roeder C."/>
            <person name="Kalthoff H."/>
            <person name="Hampe J."/>
            <person name="Moyer M.P."/>
            <person name="Foelsch U.R."/>
            <person name="Schaefer H."/>
        </authorList>
    </citation>
    <scope>INDUCTION</scope>
</reference>
<reference key="21">
    <citation type="journal article" date="2009" name="Sci. Signal.">
        <title>Quantitative phosphoproteomic analysis of T cell receptor signaling reveals system-wide modulation of protein-protein interactions.</title>
        <authorList>
            <person name="Mayya V."/>
            <person name="Lundgren D.H."/>
            <person name="Hwang S.-I."/>
            <person name="Rezaul K."/>
            <person name="Wu L."/>
            <person name="Eng J.K."/>
            <person name="Rodionov V."/>
            <person name="Han D.K."/>
        </authorList>
    </citation>
    <scope>IDENTIFICATION BY MASS SPECTROMETRY [LARGE SCALE ANALYSIS]</scope>
    <source>
        <tissue>Leukemic T-cell</tissue>
    </source>
</reference>
<reference key="22">
    <citation type="journal article" date="2010" name="Sci. Signal.">
        <title>Quantitative phosphoproteomics reveals widespread full phosphorylation site occupancy during mitosis.</title>
        <authorList>
            <person name="Olsen J.V."/>
            <person name="Vermeulen M."/>
            <person name="Santamaria A."/>
            <person name="Kumar C."/>
            <person name="Miller M.L."/>
            <person name="Jensen L.J."/>
            <person name="Gnad F."/>
            <person name="Cox J."/>
            <person name="Jensen T.S."/>
            <person name="Nigg E.A."/>
            <person name="Brunak S."/>
            <person name="Mann M."/>
        </authorList>
    </citation>
    <scope>PHOSPHORYLATION [LARGE SCALE ANALYSIS] AT SER-16 AND SER-56</scope>
    <scope>IDENTIFICATION BY MASS SPECTROMETRY [LARGE SCALE ANALYSIS]</scope>
    <source>
        <tissue>Cervix carcinoma</tissue>
    </source>
</reference>
<reference key="23">
    <citation type="journal article" date="2011" name="BMC Syst. Biol.">
        <title>Initial characterization of the human central proteome.</title>
        <authorList>
            <person name="Burkard T.R."/>
            <person name="Planyavsky M."/>
            <person name="Kaupe I."/>
            <person name="Breitwieser F.P."/>
            <person name="Buerckstuemmer T."/>
            <person name="Bennett K.L."/>
            <person name="Superti-Furga G."/>
            <person name="Colinge J."/>
        </authorList>
    </citation>
    <scope>IDENTIFICATION BY MASS SPECTROMETRY [LARGE SCALE ANALYSIS]</scope>
</reference>
<reference key="24">
    <citation type="journal article" date="2011" name="Sci. Signal.">
        <title>System-wide temporal characterization of the proteome and phosphoproteome of human embryonic stem cell differentiation.</title>
        <authorList>
            <person name="Rigbolt K.T."/>
            <person name="Prokhorova T.A."/>
            <person name="Akimov V."/>
            <person name="Henningsen J."/>
            <person name="Johansen P.T."/>
            <person name="Kratchmarova I."/>
            <person name="Kassem M."/>
            <person name="Mann M."/>
            <person name="Olsen J.V."/>
            <person name="Blagoev B."/>
        </authorList>
    </citation>
    <scope>IDENTIFICATION BY MASS SPECTROMETRY [LARGE SCALE ANALYSIS]</scope>
</reference>
<reference key="25">
    <citation type="journal article" date="2013" name="Annu. Rev. Biochem.">
        <title>Molecular architecture and assembly of the eukaryotic proteasome.</title>
        <authorList>
            <person name="Tomko R.J. Jr."/>
            <person name="Hochstrasser M."/>
        </authorList>
    </citation>
    <scope>NOMENCLATURE</scope>
</reference>
<reference key="26">
    <citation type="journal article" date="2013" name="J. Proteome Res.">
        <title>Toward a comprehensive characterization of a human cancer cell phosphoproteome.</title>
        <authorList>
            <person name="Zhou H."/>
            <person name="Di Palma S."/>
            <person name="Preisinger C."/>
            <person name="Peng M."/>
            <person name="Polat A.N."/>
            <person name="Heck A.J."/>
            <person name="Mohammed S."/>
        </authorList>
    </citation>
    <scope>PHOSPHORYLATION [LARGE SCALE ANALYSIS] AT SER-16; SER-56 AND SER-63</scope>
    <scope>IDENTIFICATION BY MASS SPECTROMETRY [LARGE SCALE ANALYSIS]</scope>
    <source>
        <tissue>Cervix carcinoma</tissue>
        <tissue>Erythroleukemia</tissue>
    </source>
</reference>
<reference key="27">
    <citation type="journal article" date="2014" name="J. Proteomics">
        <title>An enzyme assisted RP-RPLC approach for in-depth analysis of human liver phosphoproteome.</title>
        <authorList>
            <person name="Bian Y."/>
            <person name="Song C."/>
            <person name="Cheng K."/>
            <person name="Dong M."/>
            <person name="Wang F."/>
            <person name="Huang J."/>
            <person name="Sun D."/>
            <person name="Wang L."/>
            <person name="Ye M."/>
            <person name="Zou H."/>
        </authorList>
    </citation>
    <scope>IDENTIFICATION BY MASS SPECTROMETRY [LARGE SCALE ANALYSIS]</scope>
    <source>
        <tissue>Liver</tissue>
    </source>
</reference>
<reference key="28">
    <citation type="journal article" date="2016" name="Biol. Chem.">
        <title>Human 20S proteasome activity towards fluorogenic peptides of various chain lengths.</title>
        <authorList>
            <person name="Rut W."/>
            <person name="Drag M."/>
        </authorList>
    </citation>
    <scope>FUNCTION</scope>
    <scope>CATALYTIC ACTIVITY</scope>
</reference>
<reference key="29">
    <citation type="journal article" date="2015" name="Nat. Commun.">
        <title>Cryo-EM reveals the conformation of a substrate analogue in the human 20S proteasome core.</title>
        <authorList>
            <person name="da Fonseca P.C."/>
            <person name="Morris E.P."/>
        </authorList>
    </citation>
    <scope>STRUCTURE BY ELECTRON MICROSCOPY (3.50 ANGSTROMS)</scope>
    <scope>SUBUNIT</scope>
</reference>
<reference key="30">
    <citation type="journal article" date="2015" name="Structure">
        <title>Crystal structure of the human 20S proteasome in complex with carfilzomib.</title>
        <authorList>
            <person name="Harshbarger W."/>
            <person name="Miller C."/>
            <person name="Diedrich C."/>
            <person name="Sacchettini J."/>
        </authorList>
    </citation>
    <scope>X-RAY CRYSTALLOGRAPHY (2.60 ANGSTROMS)</scope>
    <scope>SUBUNIT</scope>
</reference>
<reference key="31">
    <citation type="journal article" date="2016" name="Nat. Struct. Mol. Biol.">
        <title>An atomic structure of the human 26S proteasome.</title>
        <authorList>
            <person name="Huang X."/>
            <person name="Luan B."/>
            <person name="Wu J."/>
            <person name="Shi Y."/>
        </authorList>
    </citation>
    <scope>STRUCTURE BY ELECTRON MICROSCOPY (3.50 ANGSTROMS)</scope>
    <scope>SUBUNIT</scope>
</reference>
<reference key="32">
    <citation type="journal article" date="2016" name="Proc. Natl. Acad. Sci. U.S.A.">
        <title>Structure of the human 26S proteasome at a resolution of 3.9 Aa.</title>
        <authorList>
            <person name="Schweitzer A."/>
            <person name="Aufderheide A."/>
            <person name="Rudack T."/>
            <person name="Beck F."/>
            <person name="Pfeifer G."/>
            <person name="Plitzko J.M."/>
            <person name="Sakata E."/>
            <person name="Schulten K."/>
            <person name="Foerster F."/>
            <person name="Baumeister W."/>
        </authorList>
    </citation>
    <scope>STRUCTURE BY ELECTRON MICROSCOPY (4.02 ANGSTROMS)</scope>
    <scope>SUBUNIT</scope>
</reference>
<reference key="33">
    <citation type="journal article" date="2016" name="Science">
        <title>The inhibition mechanism of human 20S proteasomes enables next-generation inhibitor design.</title>
        <authorList>
            <person name="Schrader J."/>
            <person name="Henneberg F."/>
            <person name="Mata R.A."/>
            <person name="Tittmann K."/>
            <person name="Schneider T.R."/>
            <person name="Stark H."/>
            <person name="Bourenkov G."/>
            <person name="Chari A."/>
        </authorList>
    </citation>
    <scope>X-RAY CRYSTALLOGRAPHY (1.80 ANGSTROMS)</scope>
    <scope>SUBUNIT</scope>
</reference>
<reference key="34">
    <citation type="journal article" date="2021" name="Nature">
        <title>AKIRIN2 controls the nuclear import of proteasomes in vertebrates.</title>
        <authorList>
            <person name="de Almeida M."/>
            <person name="Hinterndorfer M."/>
            <person name="Brunner H."/>
            <person name="Grishkovskaya I."/>
            <person name="Singh K."/>
            <person name="Schleiffer A."/>
            <person name="Jude J."/>
            <person name="Deswal S."/>
            <person name="Kalis R."/>
            <person name="Vunjak M."/>
            <person name="Lendl T."/>
            <person name="Imre R."/>
            <person name="Roitinger E."/>
            <person name="Neumann T."/>
            <person name="Kandolf S."/>
            <person name="Schutzbier M."/>
            <person name="Mechtler K."/>
            <person name="Versteeg G.A."/>
            <person name="Haselbach D."/>
            <person name="Zuber J."/>
        </authorList>
    </citation>
    <scope>STRUCTURE BY ELECTRON MICROSCOPY (2.80 ANGSTROMS) IN COMPLEX WITH AKIRIN2</scope>
    <scope>SUBUNIT</scope>
    <scope>SUBCELLULAR LOCATION</scope>
</reference>
<sequence>MFLTRSEYDRGVNTFSPEGRLFQVEYAIEAIKLGSTAIGIQTSEGVCLAVEKRITSPLMEPSSIEKIVEIDAHIGCAMSGLIADAKTLIDKARVETQNHWFTYNETMTVESVTQAVSNLALQFGEEDADPGAMSRPFGVALLFGGVDEKGPQLFHMDPSGTFVQCDARAIGSASEGAQSSLQEVYHKSMTLKEAIKSSLIILKQVMEEKLNATNIELATVQPGQNFHMFTKEELEEVIKDI</sequence>
<feature type="chain" id="PRO_0000124117" description="Proteasome subunit alpha type-5">
    <location>
        <begin position="1"/>
        <end position="241"/>
    </location>
</feature>
<feature type="modified residue" description="N-acetylmethionine" evidence="2">
    <location>
        <position position="1"/>
    </location>
</feature>
<feature type="modified residue" description="Phosphoserine" evidence="21 22 23 24">
    <location>
        <position position="16"/>
    </location>
</feature>
<feature type="modified residue" description="Phosphothreonine" evidence="22">
    <location>
        <position position="55"/>
    </location>
</feature>
<feature type="modified residue" description="Phosphoserine" evidence="23 24">
    <location>
        <position position="56"/>
    </location>
</feature>
<feature type="modified residue" description="Phosphoserine" evidence="24">
    <location>
        <position position="63"/>
    </location>
</feature>
<feature type="glycosylation site" description="O-linked (GlcNAc) serine" evidence="1">
    <location>
        <position position="198"/>
    </location>
</feature>
<feature type="splice variant" id="VSP_046241" description="In isoform 2." evidence="17">
    <location>
        <begin position="1"/>
        <end position="58"/>
    </location>
</feature>
<feature type="sequence conflict" description="In Ref. 1; CAA43962." evidence="19" ref="1">
    <original>A</original>
    <variation>D</variation>
    <location>
        <position position="27"/>
    </location>
</feature>
<feature type="sequence conflict" description="In Ref. 1; CAA43962." evidence="19" ref="1">
    <original>V</original>
    <variation>L</variation>
    <location>
        <position position="184"/>
    </location>
</feature>
<feature type="strand" evidence="27">
    <location>
        <begin position="7"/>
        <end position="10"/>
    </location>
</feature>
<feature type="strand" evidence="26">
    <location>
        <begin position="11"/>
        <end position="13"/>
    </location>
</feature>
<feature type="strand" evidence="28">
    <location>
        <begin position="19"/>
        <end position="21"/>
    </location>
</feature>
<feature type="helix" evidence="25">
    <location>
        <begin position="22"/>
        <end position="31"/>
    </location>
</feature>
<feature type="strand" evidence="25">
    <location>
        <begin position="37"/>
        <end position="42"/>
    </location>
</feature>
<feature type="strand" evidence="25">
    <location>
        <begin position="45"/>
        <end position="51"/>
    </location>
</feature>
<feature type="strand" evidence="30">
    <location>
        <begin position="57"/>
        <end position="59"/>
    </location>
</feature>
<feature type="helix" evidence="25">
    <location>
        <begin position="61"/>
        <end position="63"/>
    </location>
</feature>
<feature type="strand" evidence="25">
    <location>
        <begin position="67"/>
        <end position="71"/>
    </location>
</feature>
<feature type="strand" evidence="25">
    <location>
        <begin position="74"/>
        <end position="80"/>
    </location>
</feature>
<feature type="helix" evidence="25">
    <location>
        <begin position="82"/>
        <end position="84"/>
    </location>
</feature>
<feature type="helix" evidence="25">
    <location>
        <begin position="85"/>
        <end position="103"/>
    </location>
</feature>
<feature type="helix" evidence="25">
    <location>
        <begin position="109"/>
        <end position="117"/>
    </location>
</feature>
<feature type="turn" evidence="25">
    <location>
        <begin position="118"/>
        <end position="121"/>
    </location>
</feature>
<feature type="helix" evidence="29">
    <location>
        <begin position="122"/>
        <end position="124"/>
    </location>
</feature>
<feature type="strand" evidence="25">
    <location>
        <begin position="125"/>
        <end position="128"/>
    </location>
</feature>
<feature type="strand" evidence="29">
    <location>
        <begin position="130"/>
        <end position="132"/>
    </location>
</feature>
<feature type="strand" evidence="33">
    <location>
        <begin position="133"/>
        <end position="135"/>
    </location>
</feature>
<feature type="strand" evidence="25">
    <location>
        <begin position="139"/>
        <end position="147"/>
    </location>
</feature>
<feature type="strand" evidence="25">
    <location>
        <begin position="150"/>
        <end position="156"/>
    </location>
</feature>
<feature type="turn" evidence="32">
    <location>
        <begin position="158"/>
        <end position="160"/>
    </location>
</feature>
<feature type="strand" evidence="25">
    <location>
        <begin position="162"/>
        <end position="171"/>
    </location>
</feature>
<feature type="helix" evidence="25">
    <location>
        <begin position="174"/>
        <end position="184"/>
    </location>
</feature>
<feature type="helix" evidence="25">
    <location>
        <begin position="191"/>
        <end position="205"/>
    </location>
</feature>
<feature type="strand" evidence="31">
    <location>
        <begin position="206"/>
        <end position="208"/>
    </location>
</feature>
<feature type="strand" evidence="25">
    <location>
        <begin position="214"/>
        <end position="220"/>
    </location>
</feature>
<feature type="strand" evidence="25">
    <location>
        <begin position="222"/>
        <end position="224"/>
    </location>
</feature>
<feature type="strand" evidence="33">
    <location>
        <begin position="226"/>
        <end position="228"/>
    </location>
</feature>
<feature type="helix" evidence="25">
    <location>
        <begin position="231"/>
        <end position="238"/>
    </location>
</feature>
<keyword id="KW-0002">3D-structure</keyword>
<keyword id="KW-0007">Acetylation</keyword>
<keyword id="KW-0025">Alternative splicing</keyword>
<keyword id="KW-0963">Cytoplasm</keyword>
<keyword id="KW-0903">Direct protein sequencing</keyword>
<keyword id="KW-0325">Glycoprotein</keyword>
<keyword id="KW-0539">Nucleus</keyword>
<keyword id="KW-0597">Phosphoprotein</keyword>
<keyword id="KW-0647">Proteasome</keyword>
<keyword id="KW-1267">Proteomics identification</keyword>
<keyword id="KW-1185">Reference proteome</keyword>
<gene>
    <name evidence="20" type="primary">PSMA5</name>
</gene>